<dbReference type="EMBL" id="AF054284">
    <property type="protein sequence ID" value="AAC97189.1"/>
    <property type="molecule type" value="mRNA"/>
</dbReference>
<dbReference type="EMBL" id="AF086296">
    <property type="status" value="NOT_ANNOTATED_CDS"/>
    <property type="molecule type" value="mRNA"/>
</dbReference>
<dbReference type="EMBL" id="AC010746">
    <property type="status" value="NOT_ANNOTATED_CDS"/>
    <property type="molecule type" value="Genomic_DNA"/>
</dbReference>
<dbReference type="EMBL" id="AF070540">
    <property type="protein sequence ID" value="AAC28633.1"/>
    <property type="molecule type" value="mRNA"/>
</dbReference>
<dbReference type="CCDS" id="CCDS33356.1">
    <molecule id="O75533-1"/>
</dbReference>
<dbReference type="CCDS" id="CCDS46479.1">
    <molecule id="O75533-2"/>
</dbReference>
<dbReference type="RefSeq" id="NP_001005526.1">
    <molecule id="O75533-2"/>
    <property type="nucleotide sequence ID" value="NM_001005526.2"/>
</dbReference>
<dbReference type="RefSeq" id="NP_036565.2">
    <molecule id="O75533-1"/>
    <property type="nucleotide sequence ID" value="NM_012433.4"/>
</dbReference>
<dbReference type="RefSeq" id="XP_047299797.1">
    <molecule id="O75533-2"/>
    <property type="nucleotide sequence ID" value="XM_047443841.1"/>
</dbReference>
<dbReference type="RefSeq" id="XP_054197186.1">
    <molecule id="O75533-2"/>
    <property type="nucleotide sequence ID" value="XM_054341211.1"/>
</dbReference>
<dbReference type="PDB" id="2F9D">
    <property type="method" value="X-ray"/>
    <property type="resolution" value="2.50 A"/>
    <property type="chains" value="P/Q=373-415"/>
</dbReference>
<dbReference type="PDB" id="2F9J">
    <property type="method" value="X-ray"/>
    <property type="resolution" value="3.00 A"/>
    <property type="chains" value="P/Q=380-415"/>
</dbReference>
<dbReference type="PDB" id="2FHO">
    <property type="method" value="NMR"/>
    <property type="chains" value="A=379-424"/>
</dbReference>
<dbReference type="PDB" id="2PEH">
    <property type="method" value="X-ray"/>
    <property type="resolution" value="2.11 A"/>
    <property type="chains" value="C/D=333-342"/>
</dbReference>
<dbReference type="PDB" id="3LQV">
    <property type="method" value="X-ray"/>
    <property type="resolution" value="2.38 A"/>
    <property type="chains" value="P/Q=377-415"/>
</dbReference>
<dbReference type="PDB" id="4OZ1">
    <property type="method" value="X-ray"/>
    <property type="resolution" value="1.74 A"/>
    <property type="chains" value="C=333-342"/>
</dbReference>
<dbReference type="PDB" id="5IFE">
    <property type="method" value="X-ray"/>
    <property type="resolution" value="3.10 A"/>
    <property type="chains" value="C=1-1304"/>
</dbReference>
<dbReference type="PDB" id="5O9Z">
    <property type="method" value="EM"/>
    <property type="resolution" value="4.50 A"/>
    <property type="chains" value="v=1-1304"/>
</dbReference>
<dbReference type="PDB" id="5Z56">
    <property type="method" value="EM"/>
    <property type="resolution" value="5.10 A"/>
    <property type="chains" value="1=1-1304"/>
</dbReference>
<dbReference type="PDB" id="5Z57">
    <property type="method" value="EM"/>
    <property type="resolution" value="6.50 A"/>
    <property type="chains" value="1=1-1304"/>
</dbReference>
<dbReference type="PDB" id="5Z58">
    <property type="method" value="EM"/>
    <property type="resolution" value="4.90 A"/>
    <property type="chains" value="1=1-1304"/>
</dbReference>
<dbReference type="PDB" id="5ZYA">
    <property type="method" value="EM"/>
    <property type="resolution" value="3.95 A"/>
    <property type="chains" value="C=1-1304"/>
</dbReference>
<dbReference type="PDB" id="6AH0">
    <property type="method" value="EM"/>
    <property type="resolution" value="5.70 A"/>
    <property type="chains" value="1=1-1304"/>
</dbReference>
<dbReference type="PDB" id="6AHD">
    <property type="method" value="EM"/>
    <property type="resolution" value="3.80 A"/>
    <property type="chains" value="1=1-1304"/>
</dbReference>
<dbReference type="PDB" id="6EN4">
    <property type="method" value="X-ray"/>
    <property type="resolution" value="3.08 A"/>
    <property type="chains" value="C=453-1304"/>
</dbReference>
<dbReference type="PDB" id="6FF4">
    <property type="method" value="EM"/>
    <property type="resolution" value="16.00 A"/>
    <property type="chains" value="u=1-1304"/>
</dbReference>
<dbReference type="PDB" id="6FF7">
    <property type="method" value="EM"/>
    <property type="resolution" value="4.50 A"/>
    <property type="chains" value="u=1-1304"/>
</dbReference>
<dbReference type="PDB" id="6N3E">
    <property type="method" value="X-ray"/>
    <property type="resolution" value="1.89 A"/>
    <property type="chains" value="B=291-297"/>
</dbReference>
<dbReference type="PDB" id="6QX9">
    <property type="method" value="EM"/>
    <property type="resolution" value="3.28 A"/>
    <property type="chains" value="B1=1-1304"/>
</dbReference>
<dbReference type="PDB" id="6Y50">
    <property type="method" value="EM"/>
    <property type="resolution" value="4.10 A"/>
    <property type="chains" value="u=1-1304"/>
</dbReference>
<dbReference type="PDB" id="6Y53">
    <property type="method" value="EM"/>
    <property type="resolution" value="7.10 A"/>
    <property type="chains" value="u=1-1304"/>
</dbReference>
<dbReference type="PDB" id="6Y5Q">
    <property type="method" value="EM"/>
    <property type="resolution" value="7.10 A"/>
    <property type="chains" value="u=1-1304"/>
</dbReference>
<dbReference type="PDB" id="7ABG">
    <property type="method" value="EM"/>
    <property type="resolution" value="7.80 A"/>
    <property type="chains" value="u=1-1304"/>
</dbReference>
<dbReference type="PDB" id="7ABH">
    <property type="method" value="EM"/>
    <property type="resolution" value="4.50 A"/>
    <property type="chains" value="u=1-1304"/>
</dbReference>
<dbReference type="PDB" id="7ABI">
    <property type="method" value="EM"/>
    <property type="resolution" value="8.00 A"/>
    <property type="chains" value="u=1-1304"/>
</dbReference>
<dbReference type="PDB" id="7B0I">
    <property type="method" value="X-ray"/>
    <property type="resolution" value="3.00 A"/>
    <property type="chains" value="C=453-1304"/>
</dbReference>
<dbReference type="PDB" id="7B91">
    <property type="method" value="X-ray"/>
    <property type="resolution" value="3.00 A"/>
    <property type="chains" value="C=453-1304"/>
</dbReference>
<dbReference type="PDB" id="7B92">
    <property type="method" value="X-ray"/>
    <property type="resolution" value="3.00 A"/>
    <property type="chains" value="C=453-1304"/>
</dbReference>
<dbReference type="PDB" id="7B9C">
    <property type="method" value="X-ray"/>
    <property type="resolution" value="2.40 A"/>
    <property type="chains" value="C=453-1304"/>
</dbReference>
<dbReference type="PDB" id="7DVQ">
    <property type="method" value="EM"/>
    <property type="resolution" value="2.89 A"/>
    <property type="chains" value="1=1-1304"/>
</dbReference>
<dbReference type="PDB" id="7EVN">
    <property type="method" value="EM"/>
    <property type="resolution" value="2.60 A"/>
    <property type="chains" value="C=452-1304"/>
</dbReference>
<dbReference type="PDB" id="7EVO">
    <property type="method" value="EM"/>
    <property type="resolution" value="2.50 A"/>
    <property type="chains" value="1=1-1304"/>
</dbReference>
<dbReference type="PDB" id="7OMF">
    <property type="method" value="X-ray"/>
    <property type="resolution" value="3.00 A"/>
    <property type="chains" value="C=453-1304"/>
</dbReference>
<dbReference type="PDB" id="7ONB">
    <property type="method" value="EM"/>
    <property type="resolution" value="3.10 A"/>
    <property type="chains" value="C=1-1304"/>
</dbReference>
<dbReference type="PDB" id="7OPI">
    <property type="method" value="X-ray"/>
    <property type="resolution" value="3.10 A"/>
    <property type="chains" value="C=453-1304"/>
</dbReference>
<dbReference type="PDB" id="7Q3L">
    <property type="method" value="EM"/>
    <property type="resolution" value="2.30 A"/>
    <property type="chains" value="A=1-1304"/>
</dbReference>
<dbReference type="PDB" id="7Q4O">
    <property type="method" value="EM"/>
    <property type="resolution" value="2.20 A"/>
    <property type="chains" value="A=1-1304"/>
</dbReference>
<dbReference type="PDB" id="7Q4P">
    <property type="method" value="EM"/>
    <property type="resolution" value="2.20 A"/>
    <property type="chains" value="A=1-1304"/>
</dbReference>
<dbReference type="PDB" id="7QTT">
    <property type="method" value="EM"/>
    <property type="resolution" value="3.10 A"/>
    <property type="chains" value="C=1-1304"/>
</dbReference>
<dbReference type="PDB" id="7SN6">
    <property type="method" value="X-ray"/>
    <property type="resolution" value="1.80 A"/>
    <property type="chains" value="C/D=333-351"/>
</dbReference>
<dbReference type="PDB" id="7VPX">
    <property type="method" value="EM"/>
    <property type="resolution" value="3.00 A"/>
    <property type="chains" value="1=1-1304"/>
</dbReference>
<dbReference type="PDB" id="8CH6">
    <property type="method" value="EM"/>
    <property type="resolution" value="5.90 A"/>
    <property type="chains" value="C=1-1304"/>
</dbReference>
<dbReference type="PDB" id="8H6E">
    <property type="method" value="EM"/>
    <property type="resolution" value="3.20 A"/>
    <property type="chains" value="2G=1-1304"/>
</dbReference>
<dbReference type="PDB" id="8H6J">
    <property type="method" value="EM"/>
    <property type="resolution" value="3.25 A"/>
    <property type="chains" value="2G=1-1304"/>
</dbReference>
<dbReference type="PDB" id="8H6K">
    <property type="method" value="EM"/>
    <property type="resolution" value="2.70 A"/>
    <property type="chains" value="2G=1-1304"/>
</dbReference>
<dbReference type="PDB" id="8H6L">
    <property type="method" value="EM"/>
    <property type="resolution" value="2.60 A"/>
    <property type="chains" value="2G=1-1304"/>
</dbReference>
<dbReference type="PDB" id="8HK1">
    <property type="method" value="EM"/>
    <property type="resolution" value="2.70 A"/>
    <property type="chains" value="1=1-1304"/>
</dbReference>
<dbReference type="PDB" id="8I0P">
    <property type="method" value="EM"/>
    <property type="resolution" value="3.40 A"/>
    <property type="chains" value="1=1-1304"/>
</dbReference>
<dbReference type="PDB" id="8I0R">
    <property type="method" value="EM"/>
    <property type="resolution" value="3.00 A"/>
    <property type="chains" value="1=1-1304"/>
</dbReference>
<dbReference type="PDB" id="8I0S">
    <property type="method" value="EM"/>
    <property type="resolution" value="4.20 A"/>
    <property type="chains" value="1=1-1304"/>
</dbReference>
<dbReference type="PDB" id="8I0T">
    <property type="method" value="EM"/>
    <property type="resolution" value="3.00 A"/>
    <property type="chains" value="1=1-1304"/>
</dbReference>
<dbReference type="PDB" id="8I0U">
    <property type="method" value="EM"/>
    <property type="resolution" value="3.30 A"/>
    <property type="chains" value="1=1-1304"/>
</dbReference>
<dbReference type="PDB" id="8I0V">
    <property type="method" value="EM"/>
    <property type="resolution" value="3.00 A"/>
    <property type="chains" value="1=1-1304"/>
</dbReference>
<dbReference type="PDB" id="8QO9">
    <property type="method" value="EM"/>
    <property type="resolution" value="5.29 A"/>
    <property type="chains" value="B1=1-1304"/>
</dbReference>
<dbReference type="PDB" id="8QXD">
    <property type="method" value="EM"/>
    <property type="resolution" value="9.60 A"/>
    <property type="chains" value="B1=1-1304"/>
</dbReference>
<dbReference type="PDB" id="8QZS">
    <property type="method" value="EM"/>
    <property type="resolution" value="4.10 A"/>
    <property type="chains" value="B1=1-1304"/>
</dbReference>
<dbReference type="PDB" id="8R08">
    <property type="method" value="EM"/>
    <property type="resolution" value="6.10 A"/>
    <property type="chains" value="B1=1-1304"/>
</dbReference>
<dbReference type="PDB" id="8R09">
    <property type="method" value="EM"/>
    <property type="resolution" value="4.30 A"/>
    <property type="chains" value="B1=1-1304"/>
</dbReference>
<dbReference type="PDB" id="8R0A">
    <property type="method" value="EM"/>
    <property type="resolution" value="5.80 A"/>
    <property type="chains" value="B1=1-1304"/>
</dbReference>
<dbReference type="PDB" id="8R0B">
    <property type="method" value="EM"/>
    <property type="resolution" value="4.40 A"/>
    <property type="chains" value="B1=1-1304"/>
</dbReference>
<dbReference type="PDB" id="8RM5">
    <property type="method" value="EM"/>
    <property type="resolution" value="6.90 A"/>
    <property type="chains" value="B1=1-1304"/>
</dbReference>
<dbReference type="PDB" id="8Y7E">
    <property type="method" value="EM"/>
    <property type="resolution" value="4.66 A"/>
    <property type="chains" value="1=1-1304"/>
</dbReference>
<dbReference type="PDBsum" id="2F9D"/>
<dbReference type="PDBsum" id="2F9J"/>
<dbReference type="PDBsum" id="2FHO"/>
<dbReference type="PDBsum" id="2PEH"/>
<dbReference type="PDBsum" id="3LQV"/>
<dbReference type="PDBsum" id="4OZ1"/>
<dbReference type="PDBsum" id="5IFE"/>
<dbReference type="PDBsum" id="5O9Z"/>
<dbReference type="PDBsum" id="5Z56"/>
<dbReference type="PDBsum" id="5Z57"/>
<dbReference type="PDBsum" id="5Z58"/>
<dbReference type="PDBsum" id="5ZYA"/>
<dbReference type="PDBsum" id="6AH0"/>
<dbReference type="PDBsum" id="6AHD"/>
<dbReference type="PDBsum" id="6EN4"/>
<dbReference type="PDBsum" id="6FF4"/>
<dbReference type="PDBsum" id="6FF7"/>
<dbReference type="PDBsum" id="6N3E"/>
<dbReference type="PDBsum" id="6QX9"/>
<dbReference type="PDBsum" id="6Y50"/>
<dbReference type="PDBsum" id="6Y53"/>
<dbReference type="PDBsum" id="6Y5Q"/>
<dbReference type="PDBsum" id="7ABG"/>
<dbReference type="PDBsum" id="7ABH"/>
<dbReference type="PDBsum" id="7ABI"/>
<dbReference type="PDBsum" id="7B0I"/>
<dbReference type="PDBsum" id="7B91"/>
<dbReference type="PDBsum" id="7B92"/>
<dbReference type="PDBsum" id="7B9C"/>
<dbReference type="PDBsum" id="7DVQ"/>
<dbReference type="PDBsum" id="7EVN"/>
<dbReference type="PDBsum" id="7EVO"/>
<dbReference type="PDBsum" id="7OMF"/>
<dbReference type="PDBsum" id="7ONB"/>
<dbReference type="PDBsum" id="7OPI"/>
<dbReference type="PDBsum" id="7Q3L"/>
<dbReference type="PDBsum" id="7Q4O"/>
<dbReference type="PDBsum" id="7Q4P"/>
<dbReference type="PDBsum" id="7QTT"/>
<dbReference type="PDBsum" id="7SN6"/>
<dbReference type="PDBsum" id="7VPX"/>
<dbReference type="PDBsum" id="8CH6"/>
<dbReference type="PDBsum" id="8H6E"/>
<dbReference type="PDBsum" id="8H6J"/>
<dbReference type="PDBsum" id="8H6K"/>
<dbReference type="PDBsum" id="8H6L"/>
<dbReference type="PDBsum" id="8HK1"/>
<dbReference type="PDBsum" id="8I0P"/>
<dbReference type="PDBsum" id="8I0R"/>
<dbReference type="PDBsum" id="8I0S"/>
<dbReference type="PDBsum" id="8I0T"/>
<dbReference type="PDBsum" id="8I0U"/>
<dbReference type="PDBsum" id="8I0V"/>
<dbReference type="PDBsum" id="8QO9"/>
<dbReference type="PDBsum" id="8QXD"/>
<dbReference type="PDBsum" id="8QZS"/>
<dbReference type="PDBsum" id="8R08"/>
<dbReference type="PDBsum" id="8R09"/>
<dbReference type="PDBsum" id="8R0A"/>
<dbReference type="PDBsum" id="8R0B"/>
<dbReference type="PDBsum" id="8RM5"/>
<dbReference type="PDBsum" id="8Y7E"/>
<dbReference type="BMRB" id="O75533"/>
<dbReference type="EMDB" id="EMD-10688"/>
<dbReference type="EMDB" id="EMD-10689"/>
<dbReference type="EMDB" id="EMD-11695"/>
<dbReference type="EMDB" id="EMD-11696"/>
<dbReference type="EMDB" id="EMD-11697"/>
<dbReference type="EMDB" id="EMD-12994"/>
<dbReference type="EMDB" id="EMD-13793"/>
<dbReference type="EMDB" id="EMD-13811"/>
<dbReference type="EMDB" id="EMD-13812"/>
<dbReference type="EMDB" id="EMD-14146"/>
<dbReference type="EMDB" id="EMD-16658"/>
<dbReference type="EMDB" id="EMD-18529"/>
<dbReference type="EMDB" id="EMD-18718"/>
<dbReference type="EMDB" id="EMD-18781"/>
<dbReference type="EMDB" id="EMD-18786"/>
<dbReference type="EMDB" id="EMD-18787"/>
<dbReference type="EMDB" id="EMD-18788"/>
<dbReference type="EMDB" id="EMD-18789"/>
<dbReference type="EMDB" id="EMD-19349"/>
<dbReference type="EMDB" id="EMD-30875"/>
<dbReference type="EMDB" id="EMD-31330"/>
<dbReference type="EMDB" id="EMD-31334"/>
<dbReference type="EMDB" id="EMD-32074"/>
<dbReference type="EMDB" id="EMD-34500"/>
<dbReference type="EMDB" id="EMD-34505"/>
<dbReference type="EMDB" id="EMD-34507"/>
<dbReference type="EMDB" id="EMD-34508"/>
<dbReference type="EMDB" id="EMD-34841"/>
<dbReference type="EMDB" id="EMD-35105"/>
<dbReference type="EMDB" id="EMD-35107"/>
<dbReference type="EMDB" id="EMD-35108"/>
<dbReference type="EMDB" id="EMD-35109"/>
<dbReference type="EMDB" id="EMD-35110"/>
<dbReference type="EMDB" id="EMD-35111"/>
<dbReference type="EMDB" id="EMD-3766"/>
<dbReference type="EMDB" id="EMD-39013"/>
<dbReference type="EMDB" id="EMD-4255"/>
<dbReference type="EMDB" id="EMD-4665"/>
<dbReference type="EMDB" id="EMD-6889"/>
<dbReference type="EMDB" id="EMD-6890"/>
<dbReference type="EMDB" id="EMD-6891"/>
<dbReference type="EMDB" id="EMD-6915"/>
<dbReference type="EMDB" id="EMD-9621"/>
<dbReference type="EMDB" id="EMD-9624"/>
<dbReference type="SMR" id="O75533"/>
<dbReference type="BioGRID" id="117017">
    <property type="interactions" value="576"/>
</dbReference>
<dbReference type="ComplexPortal" id="CPX-1099">
    <property type="entry name" value="B-WICH chromatin remodelling complex"/>
</dbReference>
<dbReference type="ComplexPortal" id="CPX-2227">
    <property type="entry name" value="SF3B complex"/>
</dbReference>
<dbReference type="ComplexPortal" id="CPX-2539">
    <property type="entry name" value="U2 small nuclear ribonucleoprotein complex"/>
</dbReference>
<dbReference type="CORUM" id="O75533"/>
<dbReference type="DIP" id="DIP-29411N"/>
<dbReference type="ELM" id="O75533"/>
<dbReference type="FunCoup" id="O75533">
    <property type="interactions" value="4158"/>
</dbReference>
<dbReference type="IntAct" id="O75533">
    <property type="interactions" value="259"/>
</dbReference>
<dbReference type="MINT" id="O75533"/>
<dbReference type="STRING" id="9606.ENSP00000335321"/>
<dbReference type="ChEMBL" id="CHEMBL1229013"/>
<dbReference type="DrugBank" id="DB14017">
    <property type="generic name" value="H3B-8800"/>
</dbReference>
<dbReference type="GlyGen" id="O75533">
    <property type="glycosylation" value="6 sites, 1 O-linked glycan (2 sites)"/>
</dbReference>
<dbReference type="iPTMnet" id="O75533"/>
<dbReference type="MetOSite" id="O75533"/>
<dbReference type="PhosphoSitePlus" id="O75533"/>
<dbReference type="SwissPalm" id="O75533"/>
<dbReference type="BioMuta" id="SF3B1"/>
<dbReference type="jPOST" id="O75533"/>
<dbReference type="MassIVE" id="O75533"/>
<dbReference type="PaxDb" id="9606-ENSP00000335321"/>
<dbReference type="PeptideAtlas" id="O75533"/>
<dbReference type="ProteomicsDB" id="19445"/>
<dbReference type="ProteomicsDB" id="50072">
    <molecule id="O75533-1"/>
</dbReference>
<dbReference type="Pumba" id="O75533"/>
<dbReference type="Antibodypedia" id="19893">
    <property type="antibodies" value="286 antibodies from 34 providers"/>
</dbReference>
<dbReference type="DNASU" id="23451"/>
<dbReference type="Ensembl" id="ENST00000335508.11">
    <molecule id="O75533-1"/>
    <property type="protein sequence ID" value="ENSP00000335321.6"/>
    <property type="gene ID" value="ENSG00000115524.17"/>
</dbReference>
<dbReference type="Ensembl" id="ENST00000409915.8">
    <molecule id="O75533-2"/>
    <property type="protein sequence ID" value="ENSP00000428820.1"/>
    <property type="gene ID" value="ENSG00000115524.17"/>
</dbReference>
<dbReference type="Ensembl" id="ENST00000414963.2">
    <molecule id="O75533-2"/>
    <property type="protein sequence ID" value="ENSP00000402997.2"/>
    <property type="gene ID" value="ENSG00000115524.17"/>
</dbReference>
<dbReference type="GeneID" id="23451"/>
<dbReference type="KEGG" id="hsa:23451"/>
<dbReference type="MANE-Select" id="ENST00000335508.11">
    <property type="protein sequence ID" value="ENSP00000335321.6"/>
    <property type="RefSeq nucleotide sequence ID" value="NM_012433.4"/>
    <property type="RefSeq protein sequence ID" value="NP_036565.2"/>
</dbReference>
<dbReference type="UCSC" id="uc002uue.4">
    <molecule id="O75533-1"/>
    <property type="organism name" value="human"/>
</dbReference>
<dbReference type="AGR" id="HGNC:10768"/>
<dbReference type="CTD" id="23451"/>
<dbReference type="DisGeNET" id="23451"/>
<dbReference type="GeneCards" id="SF3B1"/>
<dbReference type="HGNC" id="HGNC:10768">
    <property type="gene designation" value="SF3B1"/>
</dbReference>
<dbReference type="HPA" id="ENSG00000115524">
    <property type="expression patterns" value="Low tissue specificity"/>
</dbReference>
<dbReference type="MalaCards" id="SF3B1"/>
<dbReference type="MIM" id="605590">
    <property type="type" value="gene"/>
</dbReference>
<dbReference type="neXtProt" id="NX_O75533"/>
<dbReference type="OpenTargets" id="ENSG00000115524"/>
<dbReference type="Orphanet" id="75564">
    <property type="disease" value="Acquired idiopathic sideroblastic anemia"/>
</dbReference>
<dbReference type="Orphanet" id="39044">
    <property type="disease" value="Uveal melanoma"/>
</dbReference>
<dbReference type="PharmGKB" id="PA35686"/>
<dbReference type="VEuPathDB" id="HostDB:ENSG00000115524"/>
<dbReference type="eggNOG" id="KOG0213">
    <property type="taxonomic scope" value="Eukaryota"/>
</dbReference>
<dbReference type="GeneTree" id="ENSGT00390000018393"/>
<dbReference type="HOGENOM" id="CLU_002242_0_0_1"/>
<dbReference type="InParanoid" id="O75533"/>
<dbReference type="OMA" id="LVMNYVW"/>
<dbReference type="OrthoDB" id="438939at2759"/>
<dbReference type="PAN-GO" id="O75533">
    <property type="GO annotations" value="6 GO annotations based on evolutionary models"/>
</dbReference>
<dbReference type="PhylomeDB" id="O75533"/>
<dbReference type="TreeFam" id="TF105680"/>
<dbReference type="PathwayCommons" id="O75533"/>
<dbReference type="Reactome" id="R-HSA-5250924">
    <property type="pathway name" value="B-WICH complex positively regulates rRNA expression"/>
</dbReference>
<dbReference type="Reactome" id="R-HSA-72163">
    <property type="pathway name" value="mRNA Splicing - Major Pathway"/>
</dbReference>
<dbReference type="Reactome" id="R-HSA-72165">
    <property type="pathway name" value="mRNA Splicing - Minor Pathway"/>
</dbReference>
<dbReference type="SignaLink" id="O75533"/>
<dbReference type="SIGNOR" id="O75533"/>
<dbReference type="BioGRID-ORCS" id="23451">
    <property type="hits" value="716 hits in 1171 CRISPR screens"/>
</dbReference>
<dbReference type="CD-CODE" id="232F8A39">
    <property type="entry name" value="P-body"/>
</dbReference>
<dbReference type="CD-CODE" id="804901D1">
    <property type="entry name" value="Nuclear speckle"/>
</dbReference>
<dbReference type="CD-CODE" id="C1EEEEF5">
    <property type="entry name" value="Synthetic Condensate 000309"/>
</dbReference>
<dbReference type="ChiTaRS" id="SF3B1">
    <property type="organism name" value="human"/>
</dbReference>
<dbReference type="EvolutionaryTrace" id="O75533"/>
<dbReference type="GeneWiki" id="SF3B1"/>
<dbReference type="GenomeRNAi" id="23451"/>
<dbReference type="Pharos" id="O75533">
    <property type="development level" value="Tbio"/>
</dbReference>
<dbReference type="PRO" id="PR:O75533"/>
<dbReference type="Proteomes" id="UP000005640">
    <property type="component" value="Chromosome 2"/>
</dbReference>
<dbReference type="RNAct" id="O75533">
    <property type="molecule type" value="protein"/>
</dbReference>
<dbReference type="Bgee" id="ENSG00000115524">
    <property type="expression patterns" value="Expressed in tibia and 200 other cell types or tissues"/>
</dbReference>
<dbReference type="ExpressionAtlas" id="O75533">
    <property type="expression patterns" value="baseline and differential"/>
</dbReference>
<dbReference type="GO" id="GO:0110016">
    <property type="term" value="C:B-WICH complex"/>
    <property type="evidence" value="ECO:0000314"/>
    <property type="project" value="ComplexPortal"/>
</dbReference>
<dbReference type="GO" id="GO:0071013">
    <property type="term" value="C:catalytic step 2 spliceosome"/>
    <property type="evidence" value="ECO:0000314"/>
    <property type="project" value="UniProtKB"/>
</dbReference>
<dbReference type="GO" id="GO:0016607">
    <property type="term" value="C:nuclear speck"/>
    <property type="evidence" value="ECO:0000314"/>
    <property type="project" value="HPA"/>
</dbReference>
<dbReference type="GO" id="GO:0005730">
    <property type="term" value="C:nucleolus"/>
    <property type="evidence" value="ECO:0000303"/>
    <property type="project" value="ComplexPortal"/>
</dbReference>
<dbReference type="GO" id="GO:0005654">
    <property type="term" value="C:nucleoplasm"/>
    <property type="evidence" value="ECO:0000304"/>
    <property type="project" value="Reactome"/>
</dbReference>
<dbReference type="GO" id="GO:0005634">
    <property type="term" value="C:nucleus"/>
    <property type="evidence" value="ECO:0000314"/>
    <property type="project" value="UniProtKB"/>
</dbReference>
<dbReference type="GO" id="GO:0005681">
    <property type="term" value="C:spliceosomal complex"/>
    <property type="evidence" value="ECO:0000303"/>
    <property type="project" value="UniProtKB"/>
</dbReference>
<dbReference type="GO" id="GO:0034693">
    <property type="term" value="C:U11/U12 snRNP"/>
    <property type="evidence" value="ECO:0000314"/>
    <property type="project" value="MGI"/>
</dbReference>
<dbReference type="GO" id="GO:0005689">
    <property type="term" value="C:U12-type spliceosomal complex"/>
    <property type="evidence" value="ECO:0000314"/>
    <property type="project" value="UniProtKB"/>
</dbReference>
<dbReference type="GO" id="GO:0005686">
    <property type="term" value="C:U2 snRNP"/>
    <property type="evidence" value="ECO:0000314"/>
    <property type="project" value="MGI"/>
</dbReference>
<dbReference type="GO" id="GO:0071005">
    <property type="term" value="C:U2-type precatalytic spliceosome"/>
    <property type="evidence" value="ECO:0000314"/>
    <property type="project" value="UniProtKB"/>
</dbReference>
<dbReference type="GO" id="GO:0071004">
    <property type="term" value="C:U2-type prespliceosome"/>
    <property type="evidence" value="ECO:0000318"/>
    <property type="project" value="GO_Central"/>
</dbReference>
<dbReference type="GO" id="GO:0005684">
    <property type="term" value="C:U2-type spliceosomal complex"/>
    <property type="evidence" value="ECO:0000314"/>
    <property type="project" value="UniProtKB"/>
</dbReference>
<dbReference type="GO" id="GO:0003729">
    <property type="term" value="F:mRNA binding"/>
    <property type="evidence" value="ECO:0000318"/>
    <property type="project" value="GO_Central"/>
</dbReference>
<dbReference type="GO" id="GO:0003723">
    <property type="term" value="F:RNA binding"/>
    <property type="evidence" value="ECO:0000314"/>
    <property type="project" value="UniProtKB"/>
</dbReference>
<dbReference type="GO" id="GO:1990935">
    <property type="term" value="F:splicing factor binding"/>
    <property type="evidence" value="ECO:0000314"/>
    <property type="project" value="UniProtKB"/>
</dbReference>
<dbReference type="GO" id="GO:0006338">
    <property type="term" value="P:chromatin remodeling"/>
    <property type="evidence" value="ECO:0000303"/>
    <property type="project" value="ComplexPortal"/>
</dbReference>
<dbReference type="GO" id="GO:0000398">
    <property type="term" value="P:mRNA splicing, via spliceosome"/>
    <property type="evidence" value="ECO:0000314"/>
    <property type="project" value="UniProtKB"/>
</dbReference>
<dbReference type="GO" id="GO:0045943">
    <property type="term" value="P:positive regulation of transcription by RNA polymerase I"/>
    <property type="evidence" value="ECO:0000303"/>
    <property type="project" value="ComplexPortal"/>
</dbReference>
<dbReference type="GO" id="GO:0045944">
    <property type="term" value="P:positive regulation of transcription by RNA polymerase II"/>
    <property type="evidence" value="ECO:0000303"/>
    <property type="project" value="ComplexPortal"/>
</dbReference>
<dbReference type="GO" id="GO:0045945">
    <property type="term" value="P:positive regulation of transcription by RNA polymerase III"/>
    <property type="evidence" value="ECO:0000314"/>
    <property type="project" value="ComplexPortal"/>
</dbReference>
<dbReference type="GO" id="GO:0008380">
    <property type="term" value="P:RNA splicing"/>
    <property type="evidence" value="ECO:0000305"/>
    <property type="project" value="UniProtKB"/>
</dbReference>
<dbReference type="GO" id="GO:0000375">
    <property type="term" value="P:RNA splicing, via transesterification reactions"/>
    <property type="evidence" value="ECO:0000303"/>
    <property type="project" value="UniProtKB"/>
</dbReference>
<dbReference type="GO" id="GO:0000245">
    <property type="term" value="P:spliceosomal complex assembly"/>
    <property type="evidence" value="ECO:0000318"/>
    <property type="project" value="GO_Central"/>
</dbReference>
<dbReference type="GO" id="GO:1903241">
    <property type="term" value="P:U2-type prespliceosome assembly"/>
    <property type="evidence" value="ECO:0000303"/>
    <property type="project" value="ComplexPortal"/>
</dbReference>
<dbReference type="DisProt" id="DP01863"/>
<dbReference type="FunFam" id="1.25.10.10:FF:000810">
    <property type="entry name" value="Splicing factor 3B subunit 1"/>
    <property type="match status" value="1"/>
</dbReference>
<dbReference type="FunFam" id="1.25.10.10:FF:000303">
    <property type="entry name" value="splicing factor 3B subunit 1"/>
    <property type="match status" value="1"/>
</dbReference>
<dbReference type="FunFam" id="1.25.10.10:FF:000088">
    <property type="entry name" value="Splicing factor 3b, subunit 1"/>
    <property type="match status" value="1"/>
</dbReference>
<dbReference type="Gene3D" id="1.25.10.10">
    <property type="entry name" value="Leucine-rich Repeat Variant"/>
    <property type="match status" value="2"/>
</dbReference>
<dbReference type="IDEAL" id="IID00190"/>
<dbReference type="InterPro" id="IPR011989">
    <property type="entry name" value="ARM-like"/>
</dbReference>
<dbReference type="InterPro" id="IPR016024">
    <property type="entry name" value="ARM-type_fold"/>
</dbReference>
<dbReference type="InterPro" id="IPR054573">
    <property type="entry name" value="PP2A/SF3B1-like_HEAT"/>
</dbReference>
<dbReference type="InterPro" id="IPR015016">
    <property type="entry name" value="SF3b_su1"/>
</dbReference>
<dbReference type="InterPro" id="IPR038737">
    <property type="entry name" value="SF3b_su1-like"/>
</dbReference>
<dbReference type="PANTHER" id="PTHR12097">
    <property type="entry name" value="SPLICING FACTOR 3B, SUBUNIT 1-RELATED"/>
    <property type="match status" value="1"/>
</dbReference>
<dbReference type="Pfam" id="PF22646">
    <property type="entry name" value="PPP2R1A-like_HEAT"/>
    <property type="match status" value="1"/>
</dbReference>
<dbReference type="Pfam" id="PF08920">
    <property type="entry name" value="SF3b1"/>
    <property type="match status" value="1"/>
</dbReference>
<dbReference type="SUPFAM" id="SSF48371">
    <property type="entry name" value="ARM repeat"/>
    <property type="match status" value="1"/>
</dbReference>
<evidence type="ECO:0000250" key="1"/>
<evidence type="ECO:0000250" key="2">
    <source>
        <dbReference type="UniProtKB" id="Q99NB9"/>
    </source>
</evidence>
<evidence type="ECO:0000256" key="3">
    <source>
        <dbReference type="SAM" id="MobiDB-lite"/>
    </source>
</evidence>
<evidence type="ECO:0000269" key="4">
    <source>
    </source>
</evidence>
<evidence type="ECO:0000269" key="5">
    <source>
    </source>
</evidence>
<evidence type="ECO:0000269" key="6">
    <source>
    </source>
</evidence>
<evidence type="ECO:0000269" key="7">
    <source>
    </source>
</evidence>
<evidence type="ECO:0000269" key="8">
    <source>
    </source>
</evidence>
<evidence type="ECO:0000269" key="9">
    <source>
    </source>
</evidence>
<evidence type="ECO:0000269" key="10">
    <source>
    </source>
</evidence>
<evidence type="ECO:0000269" key="11">
    <source>
    </source>
</evidence>
<evidence type="ECO:0000269" key="12">
    <source>
    </source>
</evidence>
<evidence type="ECO:0000269" key="13">
    <source>
    </source>
</evidence>
<evidence type="ECO:0000269" key="14">
    <source>
    </source>
</evidence>
<evidence type="ECO:0000269" key="15">
    <source>
    </source>
</evidence>
<evidence type="ECO:0000269" key="16">
    <source>
    </source>
</evidence>
<evidence type="ECO:0000269" key="17">
    <source>
    </source>
</evidence>
<evidence type="ECO:0000269" key="18">
    <source>
    </source>
</evidence>
<evidence type="ECO:0000269" key="19">
    <source>
    </source>
</evidence>
<evidence type="ECO:0000269" key="20">
    <source>
    </source>
</evidence>
<evidence type="ECO:0000269" key="21">
    <source>
    </source>
</evidence>
<evidence type="ECO:0000269" key="22">
    <source>
    </source>
</evidence>
<evidence type="ECO:0000269" key="23">
    <source>
    </source>
</evidence>
<evidence type="ECO:0000269" key="24">
    <source>
    </source>
</evidence>
<evidence type="ECO:0000269" key="25">
    <source>
    </source>
</evidence>
<evidence type="ECO:0000269" key="26">
    <source>
    </source>
</evidence>
<evidence type="ECO:0000269" key="27">
    <source>
    </source>
</evidence>
<evidence type="ECO:0000269" key="28">
    <source>
    </source>
</evidence>
<evidence type="ECO:0000269" key="29">
    <source ref="39"/>
</evidence>
<evidence type="ECO:0000303" key="30">
    <source>
    </source>
</evidence>
<evidence type="ECO:0000303" key="31">
    <source>
    </source>
</evidence>
<evidence type="ECO:0000303" key="32">
    <source ref="2"/>
</evidence>
<evidence type="ECO:0000303" key="33">
    <source ref="39"/>
</evidence>
<evidence type="ECO:0000305" key="34"/>
<evidence type="ECO:0000305" key="35">
    <source>
    </source>
</evidence>
<evidence type="ECO:0000312" key="36">
    <source>
        <dbReference type="HGNC" id="HGNC:10768"/>
    </source>
</evidence>
<evidence type="ECO:0007744" key="37">
    <source>
        <dbReference type="PDB" id="6N3E"/>
    </source>
</evidence>
<evidence type="ECO:0007744" key="38">
    <source>
        <dbReference type="PDB" id="6Y50"/>
    </source>
</evidence>
<evidence type="ECO:0007744" key="39">
    <source>
        <dbReference type="PDB" id="6Y53"/>
    </source>
</evidence>
<evidence type="ECO:0007744" key="40">
    <source>
        <dbReference type="PDB" id="6Y5Q"/>
    </source>
</evidence>
<evidence type="ECO:0007744" key="41">
    <source>
        <dbReference type="PDB" id="7DVQ"/>
    </source>
</evidence>
<evidence type="ECO:0007744" key="42">
    <source>
        <dbReference type="PDB" id="7Q3L"/>
    </source>
</evidence>
<evidence type="ECO:0007744" key="43">
    <source>
        <dbReference type="PDB" id="8HK1"/>
    </source>
</evidence>
<evidence type="ECO:0007744" key="44">
    <source>
    </source>
</evidence>
<evidence type="ECO:0007744" key="45">
    <source>
    </source>
</evidence>
<evidence type="ECO:0007744" key="46">
    <source>
    </source>
</evidence>
<evidence type="ECO:0007744" key="47">
    <source>
    </source>
</evidence>
<evidence type="ECO:0007744" key="48">
    <source>
    </source>
</evidence>
<evidence type="ECO:0007744" key="49">
    <source>
    </source>
</evidence>
<evidence type="ECO:0007744" key="50">
    <source>
    </source>
</evidence>
<evidence type="ECO:0007744" key="51">
    <source>
    </source>
</evidence>
<evidence type="ECO:0007744" key="52">
    <source>
    </source>
</evidence>
<evidence type="ECO:0007744" key="53">
    <source>
    </source>
</evidence>
<evidence type="ECO:0007744" key="54">
    <source>
    </source>
</evidence>
<evidence type="ECO:0007744" key="55">
    <source>
    </source>
</evidence>
<evidence type="ECO:0007744" key="56">
    <source>
    </source>
</evidence>
<evidence type="ECO:0007744" key="57">
    <source>
    </source>
</evidence>
<evidence type="ECO:0007744" key="58">
    <source>
    </source>
</evidence>
<evidence type="ECO:0007744" key="59">
    <source>
    </source>
</evidence>
<evidence type="ECO:0007829" key="60">
    <source>
        <dbReference type="PDB" id="3LQV"/>
    </source>
</evidence>
<evidence type="ECO:0007829" key="61">
    <source>
        <dbReference type="PDB" id="6EN4"/>
    </source>
</evidence>
<evidence type="ECO:0007829" key="62">
    <source>
        <dbReference type="PDB" id="7B0I"/>
    </source>
</evidence>
<evidence type="ECO:0007829" key="63">
    <source>
        <dbReference type="PDB" id="7B9C"/>
    </source>
</evidence>
<evidence type="ECO:0007829" key="64">
    <source>
        <dbReference type="PDB" id="7DVQ"/>
    </source>
</evidence>
<evidence type="ECO:0007829" key="65">
    <source>
        <dbReference type="PDB" id="7EVO"/>
    </source>
</evidence>
<evidence type="ECO:0007829" key="66">
    <source>
        <dbReference type="PDB" id="7Q3L"/>
    </source>
</evidence>
<evidence type="ECO:0007829" key="67">
    <source>
        <dbReference type="PDB" id="7Q4O"/>
    </source>
</evidence>
<evidence type="ECO:0007829" key="68">
    <source>
        <dbReference type="PDB" id="7QTT"/>
    </source>
</evidence>
<evidence type="ECO:0007829" key="69">
    <source>
        <dbReference type="PDB" id="7SN6"/>
    </source>
</evidence>
<organism>
    <name type="scientific">Homo sapiens</name>
    <name type="common">Human</name>
    <dbReference type="NCBI Taxonomy" id="9606"/>
    <lineage>
        <taxon>Eukaryota</taxon>
        <taxon>Metazoa</taxon>
        <taxon>Chordata</taxon>
        <taxon>Craniata</taxon>
        <taxon>Vertebrata</taxon>
        <taxon>Euteleostomi</taxon>
        <taxon>Mammalia</taxon>
        <taxon>Eutheria</taxon>
        <taxon>Euarchontoglires</taxon>
        <taxon>Primates</taxon>
        <taxon>Haplorrhini</taxon>
        <taxon>Catarrhini</taxon>
        <taxon>Hominidae</taxon>
        <taxon>Homo</taxon>
    </lineage>
</organism>
<gene>
    <name evidence="30 36" type="primary">SF3B1</name>
    <name evidence="31" type="synonym">SAP155</name>
</gene>
<accession>O75533</accession>
<accession>E9PCH3</accession>
<comment type="function">
    <text evidence="2 4 7 9 18 21 22 25">Component of the 17S U2 SnRNP complex of the spliceosome, a large ribonucleoprotein complex that removes introns from transcribed pre-mRNAs (PubMed:12234937, PubMed:27720643, PubMed:32494006, PubMed:34822310). The 17S U2 SnRNP complex (1) directly participates in early spliceosome assembly and (2) mediates recognition of the intron branch site during pre-mRNA splicing by promoting the selection of the pre-mRNA branch-site adenosine, the nucleophile for the first step of splicing (PubMed:32494006, PubMed:34822310). Within the 17S U2 SnRNP complex, SF3B1 is part of the SF3B subcomplex, which is required for 'A' complex assembly formed by the stable binding of U2 snRNP to the branchpoint sequence in pre-mRNA (PubMed:12234937). Sequence independent binding of SF3A and SF3B subcomplexes upstream of the branch site is essential, it may anchor U2 snRNP to the pre-mRNA (PubMed:12234937). May also be involved in the assembly of the 'E' complex (PubMed:10882114). Also acts as a component of the minor spliceosome, which is involved in the splicing of U12-type introns in pre-mRNAs (PubMed:15146077, PubMed:33509932). Together with other U2 snRNP complex components may also play a role in the selective processing of microRNAs (miRNAs) from the long primary miRNA transcript, pri-miR-17-92 (By similarity).</text>
</comment>
<comment type="subunit">
    <text evidence="2 5 6 7 8 9 10 11 12 13 14 15 16 17 18 19 20 21 22 23 24 25 26 27 29">Component of the 17S U2 SnRNP complex, a ribonucleoprotein complex that contains small nuclear RNA (snRNA) U2 and a number of specific proteins (PubMed:30567737, PubMed:32494006, PubMed:34822310, PubMed:36797247). Part of the SF3B subcomplex of the 17S U2 SnRNP complex (PubMed:12234937, PubMed:12738865, PubMed:27720643, PubMed:28541300). SF3B associates with the splicing subcomplex SF3A and a 12S RNA unit to form the U2 small nuclear ribonucleoproteins complex (U2 snRNP) (PubMed:12234937). Within the SF3B complex, interacts directly (via HEAT domain) with SF3B3, SF3B5, SF3B6 and (via HEAT domain) with PHF5A (PubMed:16432215, PubMed:21062891, PubMed:27720643, Ref.39). The SF3B subcomplex interacts with U2AF2 (PubMed:27720643). Identified in the spliceosome C complex (PubMed:11991638). Component of the minor (U12-type spliceosome) spliceosome (PubMed:15146077, PubMed:33509932). Within the minor spliceosome complex, interacts with SCNM1 and CRIPT (PubMed:33509932). Component of the B-WICH complex, at least composed of SMARCA5/SNF2H, BAZ1B/WSTF, SF3B1, DEK, MYO1C, ERCC6, MYBBP1A and DDX21 (PubMed:16603771). Phosphorylated form interacts with PPP1R8 (PubMed:12105215). Interacts with PQBP1 (PubMed:23512658). Interacts with RBM17 (PubMed:17589525). Interacts with RBM39 (PubMed:24795046). Interacts with SETX (PubMed:21700224). Interacts with RBM15 (PubMed:26575292). Interacts with USH1G (PubMed:34023904). Interacts with SDE2 (PubMed:34365507). Interacts with U2AF1 (PubMed:34365507). Interacts with CACTIN (PubMed:34365507). Interacts with ZRSR1 (By similarity). Interacts with CYREN (PubMed:37813856).</text>
</comment>
<comment type="interaction">
    <interactant intactId="EBI-876542">
        <id>O75533</id>
    </interactant>
    <interactant intactId="EBI-1038838">
        <id>Q13936</id>
        <label>CACNA1C</label>
    </interactant>
    <organismsDiffer>false</organismsDiffer>
    <experiments>2</experiments>
</comment>
<comment type="interaction">
    <interactant intactId="EBI-876542">
        <id>O75533</id>
    </interactant>
    <interactant intactId="EBI-740272">
        <id>Q96I25</id>
        <label>RBM17</label>
    </interactant>
    <organismsDiffer>false</organismsDiffer>
    <experiments>7</experiments>
</comment>
<comment type="interaction">
    <interactant intactId="EBI-876542">
        <id>O75533</id>
    </interactant>
    <interactant intactId="EBI-2462271">
        <id>Q15428</id>
        <label>SF3A2</label>
    </interactant>
    <organismsDiffer>false</organismsDiffer>
    <experiments>3</experiments>
</comment>
<comment type="interaction">
    <interactant intactId="EBI-876542">
        <id>O75533</id>
    </interactant>
    <interactant intactId="EBI-1046261">
        <id>Q9Y3B4</id>
        <label>SF3B6</label>
    </interactant>
    <organismsDiffer>false</organismsDiffer>
    <experiments>3</experiments>
</comment>
<comment type="interaction">
    <interactant intactId="EBI-15565798">
        <id>O75533-1</id>
    </interactant>
    <interactant intactId="EBI-720468">
        <id>O43719</id>
        <label>HTATSF1</label>
    </interactant>
    <organismsDiffer>false</organismsDiffer>
    <experiments>6</experiments>
</comment>
<comment type="interaction">
    <interactant intactId="EBI-15565798">
        <id>O75533-1</id>
    </interactant>
    <interactant intactId="EBI-740272">
        <id>Q96I25</id>
        <label>RBM17</label>
    </interactant>
    <organismsDiffer>false</organismsDiffer>
    <experiments>3</experiments>
</comment>
<comment type="interaction">
    <interactant intactId="EBI-15565798">
        <id>O75533-1</id>
    </interactant>
    <interactant intactId="EBI-1046261">
        <id>Q9Y3B4</id>
        <label>SF3B6</label>
    </interactant>
    <organismsDiffer>false</organismsDiffer>
    <experiments>3</experiments>
</comment>
<comment type="subcellular location">
    <subcellularLocation>
        <location evidence="18 19 23">Nucleus</location>
    </subcellularLocation>
    <subcellularLocation>
        <location evidence="6 19 23">Nucleus speckle</location>
    </subcellularLocation>
    <text evidence="6">During mitosis, transiently dispersed from the nuclear speckles to the cytoplasm.</text>
</comment>
<comment type="alternative products">
    <event type="alternative splicing"/>
    <isoform>
        <id>O75533-1</id>
        <name>1</name>
        <sequence type="displayed"/>
    </isoform>
    <isoform>
        <id>O75533-2</id>
        <name>2</name>
        <sequence type="described" ref="VSP_046182 VSP_046183"/>
    </isoform>
</comment>
<comment type="PTM">
    <text evidence="6 28">Phosphorylated. Phosphorylation occurs concomitantly with the splicing catalytic steps. Phosphorylation on Thr-244, Thr-248 and Thr-313 by cyclin-dependent kinases promotes interaction with PPP1R8 during mitosis.</text>
</comment>
<comment type="PTM">
    <text evidence="2">Citrullinated by PADI4.</text>
</comment>
<comment type="similarity">
    <text evidence="34">Belongs to the SF3B1 family.</text>
</comment>
<proteinExistence type="evidence at protein level"/>
<sequence>MAKIAKTHEDIEAQIREIQGKKAALDEAQGVGLDSTGYYDQEIYGGSDSRFAGYVTSIAATELEDDDDDYSSSTSLLGQKKPGYHAPVALLNDIPQSTEQYDPFAEHRPPKIADREDEYKKHRRTMIISPERLDPFADGGKTPDPKMNARTYMDVMREQHLTKEEREIRQQLAEKAKAGELKVVNGAAASQPPSKRKRRWDQTADQTPGATPKKLSSWDQAETPGHTPSLRWDETPGRAKGSETPGATPGSKIWDPTPSHTPAGAATPGRGDTPGHATPGHGGATSSARKNRWDETPKTERDTPGHGSGWAETPRTDRGGDSIGETPTPGASKRKSRWDETPASQMGGSTPVLTPGKTPIGTPAMNMATPTPGHIMSMTPEQLQAWRWEREIDERNRPLSDEELDAMFPEGYKVLPPPAGYVPIRTPARKLTATPTPLGGMTGFHMQTEDRTMKSVNDQPSGNLPFLKPDDIQYFDKLLVDVDESTLSPEEQKERKIMKLLLKIKNGTPPMRKAALRQITDKAREFGAGPLFNQILPLLMSPTLEDQERHLLVKVIDRILYKLDDLVRPYVHKILVVIEPLLIDEDYYARVEGREIISNLAKAAGLATMISTMRPDIDNMDEYVRNTTARAFAVVASALGIPSLLPFLKAVCKSKKSWQARHTGIKIVQQIAILMGCAILPHLRSLVEIIEHGLVDEQQKVRTISALAIAALAEAATPYGIESFDSVLKPLWKGIRQHRGKGLAAFLKAIGYLIPLMDAEYANYYTREVMLILIREFQSPDEEMKKIVLKVVKQCCGTDGVEANYIKTEILPPFFKHFWQHRMALDRRNYRQLVDTTVELANKVGAAEIISRIVDDLKDEAEQYRKMVMETIEKIMGNLGAADIDHKLEEQLIDGILYAFQEQTTEDSVMLNGFGTVVNALGKRVKPYLPQICGTVLWRLNNKSAKVRQQAADLISRTAVVMKTCQEEKLMGHLGVVLYEYLGEEYPEVLGSILGALKAIVNVIGMHKMTPPIKDLLPRLTPILKNRHEKVQENCIDLVGRIADRGAEYVSAREWMRICFELLELLKAHKKAIRRATVNTFGYIAKAIGPHDVLATLLNNLKVQERQNRVCTTVAIAIVAETCSPFTVLPALMNEYRVPELNVQNGVLKSLSFLFEYIGEMGKDYIYAVTPLLEDALMDRDLVHRQTASAVVQHMSLGVYGFGCEDSLNHLLNYVWPNVFETSPHVIQAVMGALEGLRVAIGPCRMLQYCLQGLFHPARKVRDVYWKIYNSIYIGSQDALIAHYPRIYNDDKNTYIRYELDYIL</sequence>
<feature type="chain" id="PRO_0000174323" description="Splicing factor 3B subunit 1">
    <location>
        <begin position="1"/>
        <end position="1304"/>
    </location>
</feature>
<feature type="repeat" description="HEAT 1">
    <location>
        <begin position="529"/>
        <end position="568"/>
    </location>
</feature>
<feature type="repeat" description="HEAT 2">
    <location>
        <begin position="569"/>
        <end position="603"/>
    </location>
</feature>
<feature type="repeat" description="HEAT 3">
    <location>
        <begin position="604"/>
        <end position="641"/>
    </location>
</feature>
<feature type="repeat" description="HEAT 4">
    <location>
        <begin position="643"/>
        <end position="677"/>
    </location>
</feature>
<feature type="repeat" description="HEAT 5">
    <location>
        <begin position="680"/>
        <end position="718"/>
    </location>
</feature>
<feature type="repeat" description="HEAT 6">
    <location>
        <begin position="763"/>
        <end position="801"/>
    </location>
</feature>
<feature type="repeat" description="HEAT 7">
    <location>
        <begin position="843"/>
        <end position="881"/>
    </location>
</feature>
<feature type="repeat" description="HEAT 8">
    <location>
        <begin position="1010"/>
        <end position="1048"/>
    </location>
</feature>
<feature type="repeat" description="HEAT 9">
    <location>
        <begin position="1052"/>
        <end position="1090"/>
    </location>
</feature>
<feature type="repeat" description="HEAT 10">
    <location>
        <begin position="1122"/>
        <end position="1160"/>
    </location>
</feature>
<feature type="repeat" description="HEAT 11">
    <location>
        <begin position="1163"/>
        <end position="1201"/>
    </location>
</feature>
<feature type="region of interest" description="Disordered" evidence="3">
    <location>
        <begin position="100"/>
        <end position="119"/>
    </location>
</feature>
<feature type="region of interest" description="Disordered" evidence="3">
    <location>
        <begin position="124"/>
        <end position="148"/>
    </location>
</feature>
<feature type="region of interest" description="Disordered" evidence="3">
    <location>
        <begin position="173"/>
        <end position="360"/>
    </location>
</feature>
<feature type="region of interest" description="U2AF homology region; mediates interaction with RBM39" evidence="16">
    <location>
        <begin position="190"/>
        <end position="342"/>
    </location>
</feature>
<feature type="region of interest" description="Interaction with PPP1R8" evidence="6">
    <location>
        <begin position="223"/>
        <end position="491"/>
    </location>
</feature>
<feature type="region of interest" description="Interaction with SF3B14">
    <location>
        <begin position="529"/>
        <end position="568"/>
    </location>
</feature>
<feature type="region of interest" description="Interaction with PHF5A" evidence="18">
    <location>
        <begin position="547"/>
        <end position="550"/>
    </location>
</feature>
<feature type="region of interest" description="Interaction with PHF5A" evidence="18">
    <location>
        <begin position="1156"/>
        <end position="1157"/>
    </location>
</feature>
<feature type="region of interest" description="Interaction with SF3B3 and SF3B5" evidence="18">
    <location>
        <begin position="1248"/>
        <end position="1304"/>
    </location>
</feature>
<feature type="compositionally biased region" description="Basic and acidic residues" evidence="3">
    <location>
        <begin position="104"/>
        <end position="119"/>
    </location>
</feature>
<feature type="compositionally biased region" description="Basic and acidic residues" evidence="3">
    <location>
        <begin position="231"/>
        <end position="241"/>
    </location>
</feature>
<feature type="compositionally biased region" description="Basic and acidic residues" evidence="3">
    <location>
        <begin position="291"/>
        <end position="304"/>
    </location>
</feature>
<feature type="compositionally biased region" description="Polar residues" evidence="3">
    <location>
        <begin position="342"/>
        <end position="352"/>
    </location>
</feature>
<feature type="site" description="Interaction with RNA" evidence="18">
    <location>
        <position position="469"/>
    </location>
</feature>
<feature type="site" description="Interaction with RNA" evidence="18">
    <location>
        <position position="587"/>
    </location>
</feature>
<feature type="site" description="Interaction with PHF5A" evidence="18">
    <location>
        <position position="592"/>
    </location>
</feature>
<feature type="site" description="Interaction with SF3B3" evidence="18">
    <location>
        <position position="602"/>
    </location>
</feature>
<feature type="site" description="Interaction with SF3B3" evidence="18">
    <location>
        <position position="677"/>
    </location>
</feature>
<feature type="site" description="Interaction with RNA" evidence="18">
    <location>
        <position position="1035"/>
    </location>
</feature>
<feature type="site" description="Interaction with RNA" evidence="18">
    <location>
        <position position="1049"/>
    </location>
</feature>
<feature type="site" description="Interaction with RNA" evidence="18">
    <location>
        <position position="1141"/>
    </location>
</feature>
<feature type="site" description="Interaction with SF3B3" evidence="18">
    <location>
        <position position="1205"/>
    </location>
</feature>
<feature type="modified residue" description="Phosphothreonine" evidence="54">
    <location>
        <position position="125"/>
    </location>
</feature>
<feature type="modified residue" description="Phosphoserine" evidence="48 52 53 54 55">
    <location>
        <position position="129"/>
    </location>
</feature>
<feature type="modified residue" description="N6-acetyllysine" evidence="50">
    <location>
        <position position="141"/>
    </location>
</feature>
<feature type="modified residue" description="Phosphothreonine" evidence="46 48 54">
    <location>
        <position position="142"/>
    </location>
</feature>
<feature type="modified residue" description="Citrulline" evidence="1">
    <location>
        <position position="157"/>
    </location>
</feature>
<feature type="modified residue" description="Phosphoserine" evidence="48 52 54">
    <location>
        <position position="194"/>
    </location>
</feature>
<feature type="modified residue" description="Phosphothreonine" evidence="52">
    <location>
        <position position="203"/>
    </location>
</feature>
<feature type="modified residue" description="Phosphothreonine" evidence="44 48 51 52 54">
    <location>
        <position position="207"/>
    </location>
</feature>
<feature type="modified residue" description="Phosphothreonine" evidence="44 45 48 51 52 53 54 55">
    <location>
        <position position="211"/>
    </location>
</feature>
<feature type="modified residue" description="N6-acetyllysine; alternate" evidence="2">
    <location>
        <position position="214"/>
    </location>
</feature>
<feature type="modified residue" description="Phosphothreonine" evidence="45 46 47 48 51 52 54">
    <location>
        <position position="223"/>
    </location>
</feature>
<feature type="modified residue" description="Phosphothreonine" evidence="48 51 54">
    <location>
        <position position="227"/>
    </location>
</feature>
<feature type="modified residue" description="Phosphoserine" evidence="2">
    <location>
        <position position="229"/>
    </location>
</feature>
<feature type="modified residue" description="Phosphothreonine" evidence="54">
    <location>
        <position position="235"/>
    </location>
</feature>
<feature type="modified residue" description="Phosphothreonine" evidence="6">
    <location>
        <position position="244"/>
    </location>
</feature>
<feature type="modified residue" description="Phosphothreonine" evidence="35">
    <location>
        <position position="248"/>
    </location>
</feature>
<feature type="modified residue" description="Phosphothreonine" evidence="54 55">
    <location>
        <position position="257"/>
    </location>
</feature>
<feature type="modified residue" description="Phosphothreonine" evidence="54 55">
    <location>
        <position position="261"/>
    </location>
</feature>
<feature type="modified residue" description="Phosphothreonine" evidence="47 54 55">
    <location>
        <position position="267"/>
    </location>
</feature>
<feature type="modified residue" description="Phosphothreonine" evidence="55">
    <location>
        <position position="273"/>
    </location>
</feature>
<feature type="modified residue" description="Phosphothreonine" evidence="54 55">
    <location>
        <position position="278"/>
    </location>
</feature>
<feature type="modified residue" description="Phosphoserine" evidence="55">
    <location>
        <position position="287"/>
    </location>
</feature>
<feature type="modified residue" description="Phosphothreonine" evidence="45 54">
    <location>
        <position position="296"/>
    </location>
</feature>
<feature type="modified residue" description="Phosphothreonine" evidence="45">
    <location>
        <position position="299"/>
    </location>
</feature>
<feature type="modified residue" description="Phosphothreonine" evidence="54 55">
    <location>
        <position position="303"/>
    </location>
</feature>
<feature type="modified residue" description="Phosphothreonine" evidence="54 55">
    <location>
        <position position="313"/>
    </location>
</feature>
<feature type="modified residue" description="Phosphoserine" evidence="54">
    <location>
        <position position="322"/>
    </location>
</feature>
<feature type="modified residue" description="Phosphothreonine" evidence="48 51 52 54">
    <location>
        <position position="326"/>
    </location>
</feature>
<feature type="modified residue" description="Phosphothreonine" evidence="44 48 52">
    <location>
        <position position="328"/>
    </location>
</feature>
<feature type="modified residue" description="Phosphoserine" evidence="48 54">
    <location>
        <position position="332"/>
    </location>
</feature>
<feature type="modified residue" description="Phosphothreonine" evidence="51 53">
    <location>
        <position position="341"/>
    </location>
</feature>
<feature type="modified residue" description="Phosphoserine" evidence="53">
    <location>
        <position position="344"/>
    </location>
</feature>
<feature type="modified residue" description="Phosphoserine" evidence="51 53">
    <location>
        <position position="349"/>
    </location>
</feature>
<feature type="modified residue" description="Phosphothreonine" evidence="51 54">
    <location>
        <position position="350"/>
    </location>
</feature>
<feature type="modified residue" description="Phosphothreonine" evidence="49 53 54">
    <location>
        <position position="354"/>
    </location>
</feature>
<feature type="modified residue" description="Phosphoserine" evidence="51 54">
    <location>
        <position position="400"/>
    </location>
</feature>
<feature type="modified residue" description="Phosphothreonine" evidence="54">
    <location>
        <position position="426"/>
    </location>
</feature>
<feature type="modified residue" description="Phosphothreonine; by DYRK1A" evidence="51 54">
    <location>
        <position position="434"/>
    </location>
</feature>
<feature type="modified residue" description="Phosphothreonine" evidence="51 54">
    <location>
        <position position="436"/>
    </location>
</feature>
<feature type="modified residue" description="Phosphoserine" evidence="48 52 54 55">
    <location>
        <position position="488"/>
    </location>
</feature>
<feature type="modified residue" description="N6-acetyllysine" evidence="50">
    <location>
        <position position="554"/>
    </location>
</feature>
<feature type="modified residue" description="N6-acetyllysine" evidence="50">
    <location>
        <position position="562"/>
    </location>
</feature>
<feature type="cross-link" description="Glycyl lysine isopeptide (Lys-Gly) (interchain with G-Cter in SUMO2); alternate" evidence="59">
    <location>
        <position position="214"/>
    </location>
</feature>
<feature type="cross-link" description="Glycyl lysine isopeptide (Lys-Gly) (interchain with G-Cter in SUMO1); alternate" evidence="56">
    <location>
        <position position="413"/>
    </location>
</feature>
<feature type="cross-link" description="Glycyl lysine isopeptide (Lys-Gly) (interchain with G-Cter in SUMO2); alternate" evidence="56 57 58 59">
    <location>
        <position position="413"/>
    </location>
</feature>
<feature type="cross-link" description="Glycyl lysine isopeptide (Lys-Gly) (interchain with G-Cter in SUMO2)" evidence="59">
    <location>
        <position position="430"/>
    </location>
</feature>
<feature type="splice variant" id="VSP_046182" description="In isoform 2." evidence="32">
    <original>GKTPD</original>
    <variation>FYSAA</variation>
    <location>
        <begin position="140"/>
        <end position="144"/>
    </location>
</feature>
<feature type="splice variant" id="VSP_046183" description="In isoform 2." evidence="32">
    <location>
        <begin position="145"/>
        <end position="1304"/>
    </location>
</feature>
<feature type="mutagenesis site" description="Abolishes interaction with RBM39; when associated with A-218; A-232; A-254; A-293; A-310 and A-338." evidence="16">
    <original>W</original>
    <variation>A</variation>
    <location>
        <position position="200"/>
    </location>
</feature>
<feature type="mutagenesis site" description="Abolishes interaction with RBM39; when associated with A-200; A-232; A-254; A-293; A-310 and A-338." evidence="16">
    <original>W</original>
    <variation>A</variation>
    <location>
        <position position="218"/>
    </location>
</feature>
<feature type="mutagenesis site" description="No effect on interaction with PPP1R8." evidence="6">
    <original>T</original>
    <variation>A</variation>
    <location>
        <position position="223"/>
    </location>
</feature>
<feature type="mutagenesis site" description="No effect on interaction with PPP1R8." evidence="6">
    <original>T</original>
    <variation>A</variation>
    <location>
        <position position="227"/>
    </location>
</feature>
<feature type="mutagenesis site" description="Abolishes interaction with RBM39; when associated with A-200; A-218; A-254; A-293; A-310 and A-338." evidence="16">
    <original>W</original>
    <variation>A</variation>
    <location>
        <position position="232"/>
    </location>
</feature>
<feature type="mutagenesis site" description="No effect on interaction with PPP1R8." evidence="6">
    <original>T</original>
    <variation>A</variation>
    <location>
        <position position="235"/>
    </location>
</feature>
<feature type="mutagenesis site" description="Slight inhibition of interaction with PPP1R8." evidence="6">
    <original>T</original>
    <variation>A</variation>
    <location>
        <position position="244"/>
    </location>
</feature>
<feature type="mutagenesis site" description="Slight inhibition of interaction with PPP1R8." evidence="6">
    <original>T</original>
    <variation>A</variation>
    <location>
        <position position="248"/>
    </location>
</feature>
<feature type="mutagenesis site" description="Abolishes interaction with RBM39; when associated with A-200; A-218; A-232; A-293; A-310 and A-338." evidence="16">
    <original>W</original>
    <variation>A</variation>
    <location>
        <position position="254"/>
    </location>
</feature>
<feature type="mutagenesis site" description="No effect on interaction with PPP1R8." evidence="6">
    <original>T</original>
    <variation>A</variation>
    <location>
        <position position="257"/>
    </location>
</feature>
<feature type="mutagenesis site" description="Slight inhibition of interaction with PPP1R8." evidence="6">
    <original>T</original>
    <variation>A</variation>
    <location>
        <position position="261"/>
    </location>
</feature>
<feature type="mutagenesis site" description="No effect on interaction with PPP1R8." evidence="6">
    <original>T</original>
    <variation>A</variation>
    <location>
        <position position="267"/>
    </location>
</feature>
<feature type="mutagenesis site" description="No effect on interaction with PPP1R8." evidence="6">
    <original>T</original>
    <variation>A</variation>
    <location>
        <position position="273"/>
    </location>
</feature>
<feature type="mutagenesis site" description="No effect on interaction with PPP1R8." evidence="6">
    <original>T</original>
    <variation>A</variation>
    <location>
        <position position="278"/>
    </location>
</feature>
<feature type="mutagenesis site" description="Abolishes interaction with RBM39; when associated with A-200; A-218; A-232; A-254; A-310 and A-338." evidence="16">
    <original>W</original>
    <variation>A</variation>
    <location>
        <position position="293"/>
    </location>
</feature>
<feature type="mutagenesis site" description="No effect on interaction with PPP1R8." evidence="6">
    <original>T</original>
    <variation>A</variation>
    <location>
        <position position="296"/>
    </location>
</feature>
<feature type="mutagenesis site" description="No effect on interaction with PPP1R8." evidence="6">
    <original>T</original>
    <variation>A</variation>
    <location>
        <position position="303"/>
    </location>
</feature>
<feature type="mutagenesis site" description="Abolishes interaction with RBM39; when associated with A-200; A-218; A-232; A-254; A-293 and A-338." evidence="16">
    <original>W</original>
    <variation>A</variation>
    <location>
        <position position="310"/>
    </location>
</feature>
<feature type="mutagenesis site" description="No effect on interaction with PPP1R8." evidence="6">
    <original>T</original>
    <variation>A</variation>
    <location>
        <position position="313"/>
    </location>
</feature>
<feature type="mutagenesis site" description="Abolishes interaction with RBM39; when associated with A-200; A-218; A-232; A-254; A-293 and A-310." evidence="16">
    <original>W</original>
    <variation>A</variation>
    <location>
        <position position="338"/>
    </location>
</feature>
<feature type="mutagenesis site" description="Does not affect the stability of the SF3B complex interaction with U2AF65. Does not decrease the affinity to RNA." evidence="18">
    <original>K</original>
    <variation>E</variation>
    <location>
        <position position="700"/>
    </location>
</feature>
<feature type="sequence conflict" description="In Ref. 1; AAC97189." evidence="34" ref="1">
    <original>A</original>
    <variation>V</variation>
    <location>
        <position position="149"/>
    </location>
</feature>
<feature type="sequence conflict" description="In Ref. 1; AAC97189." evidence="34" ref="1">
    <original>R</original>
    <variation>L</variation>
    <location>
        <position position="594"/>
    </location>
</feature>
<feature type="helix" evidence="64">
    <location>
        <begin position="88"/>
        <end position="92"/>
    </location>
</feature>
<feature type="helix" evidence="64">
    <location>
        <begin position="103"/>
        <end position="106"/>
    </location>
</feature>
<feature type="turn" evidence="64">
    <location>
        <begin position="112"/>
        <end position="114"/>
    </location>
</feature>
<feature type="helix" evidence="64">
    <location>
        <begin position="120"/>
        <end position="124"/>
    </location>
</feature>
<feature type="helix" evidence="64">
    <location>
        <begin position="137"/>
        <end position="140"/>
    </location>
</feature>
<feature type="helix" evidence="64">
    <location>
        <begin position="152"/>
        <end position="175"/>
    </location>
</feature>
<feature type="helix" evidence="69">
    <location>
        <begin position="343"/>
        <end position="345"/>
    </location>
</feature>
<feature type="helix" evidence="60">
    <location>
        <begin position="380"/>
        <end position="394"/>
    </location>
</feature>
<feature type="helix" evidence="67">
    <location>
        <begin position="401"/>
        <end position="405"/>
    </location>
</feature>
<feature type="strand" evidence="67">
    <location>
        <begin position="410"/>
        <end position="414"/>
    </location>
</feature>
<feature type="helix" evidence="64">
    <location>
        <begin position="452"/>
        <end position="455"/>
    </location>
</feature>
<feature type="strand" evidence="64">
    <location>
        <begin position="461"/>
        <end position="463"/>
    </location>
</feature>
<feature type="helix" evidence="63">
    <location>
        <begin position="469"/>
        <end position="471"/>
    </location>
</feature>
<feature type="helix" evidence="63">
    <location>
        <begin position="472"/>
        <end position="475"/>
    </location>
</feature>
<feature type="helix" evidence="63">
    <location>
        <begin position="476"/>
        <end position="478"/>
    </location>
</feature>
<feature type="strand" evidence="63">
    <location>
        <begin position="484"/>
        <end position="487"/>
    </location>
</feature>
<feature type="helix" evidence="67">
    <location>
        <begin position="492"/>
        <end position="505"/>
    </location>
</feature>
<feature type="helix" evidence="67">
    <location>
        <begin position="509"/>
        <end position="526"/>
    </location>
</feature>
<feature type="helix" evidence="67">
    <location>
        <begin position="528"/>
        <end position="539"/>
    </location>
</feature>
<feature type="helix" evidence="67">
    <location>
        <begin position="546"/>
        <end position="563"/>
    </location>
</feature>
<feature type="helix" evidence="67">
    <location>
        <begin position="564"/>
        <end position="570"/>
    </location>
</feature>
<feature type="helix" evidence="67">
    <location>
        <begin position="571"/>
        <end position="578"/>
    </location>
</feature>
<feature type="helix" evidence="67">
    <location>
        <begin position="579"/>
        <end position="582"/>
    </location>
</feature>
<feature type="helix" evidence="67">
    <location>
        <begin position="587"/>
        <end position="603"/>
    </location>
</feature>
<feature type="helix" evidence="67">
    <location>
        <begin position="606"/>
        <end position="613"/>
    </location>
</feature>
<feature type="helix" evidence="67">
    <location>
        <begin position="616"/>
        <end position="618"/>
    </location>
</feature>
<feature type="helix" evidence="67">
    <location>
        <begin position="622"/>
        <end position="636"/>
    </location>
</feature>
<feature type="helix" evidence="67">
    <location>
        <begin position="641"/>
        <end position="651"/>
    </location>
</feature>
<feature type="helix" evidence="67">
    <location>
        <begin position="658"/>
        <end position="675"/>
    </location>
</feature>
<feature type="helix" evidence="67">
    <location>
        <begin position="676"/>
        <end position="682"/>
    </location>
</feature>
<feature type="helix" evidence="67">
    <location>
        <begin position="683"/>
        <end position="690"/>
    </location>
</feature>
<feature type="helix" evidence="67">
    <location>
        <begin position="691"/>
        <end position="694"/>
    </location>
</feature>
<feature type="helix" evidence="67">
    <location>
        <begin position="699"/>
        <end position="716"/>
    </location>
</feature>
<feature type="helix" evidence="67">
    <location>
        <begin position="721"/>
        <end position="723"/>
    </location>
</feature>
<feature type="helix" evidence="67">
    <location>
        <begin position="725"/>
        <end position="737"/>
    </location>
</feature>
<feature type="helix" evidence="67">
    <location>
        <begin position="740"/>
        <end position="753"/>
    </location>
</feature>
<feature type="helix" evidence="67">
    <location>
        <begin position="754"/>
        <end position="756"/>
    </location>
</feature>
<feature type="helix" evidence="67">
    <location>
        <begin position="759"/>
        <end position="776"/>
    </location>
</feature>
<feature type="helix" evidence="67">
    <location>
        <begin position="782"/>
        <end position="797"/>
    </location>
</feature>
<feature type="strand" evidence="66">
    <location>
        <begin position="798"/>
        <end position="801"/>
    </location>
</feature>
<feature type="helix" evidence="67">
    <location>
        <begin position="803"/>
        <end position="809"/>
    </location>
</feature>
<feature type="helix" evidence="67">
    <location>
        <begin position="811"/>
        <end position="818"/>
    </location>
</feature>
<feature type="helix" evidence="67">
    <location>
        <begin position="821"/>
        <end position="825"/>
    </location>
</feature>
<feature type="helix" evidence="67">
    <location>
        <begin position="827"/>
        <end position="844"/>
    </location>
</feature>
<feature type="helix" evidence="67">
    <location>
        <begin position="846"/>
        <end position="853"/>
    </location>
</feature>
<feature type="helix" evidence="67">
    <location>
        <begin position="854"/>
        <end position="858"/>
    </location>
</feature>
<feature type="helix" evidence="67">
    <location>
        <begin position="862"/>
        <end position="879"/>
    </location>
</feature>
<feature type="helix" evidence="67">
    <location>
        <begin position="886"/>
        <end position="901"/>
    </location>
</feature>
<feature type="helix" evidence="67">
    <location>
        <begin position="908"/>
        <end position="921"/>
    </location>
</feature>
<feature type="helix" evidence="67">
    <location>
        <begin position="922"/>
        <end position="925"/>
    </location>
</feature>
<feature type="turn" evidence="67">
    <location>
        <begin position="926"/>
        <end position="928"/>
    </location>
</feature>
<feature type="helix" evidence="67">
    <location>
        <begin position="929"/>
        <end position="940"/>
    </location>
</feature>
<feature type="strand" evidence="68">
    <location>
        <begin position="942"/>
        <end position="944"/>
    </location>
</feature>
<feature type="helix" evidence="67">
    <location>
        <begin position="945"/>
        <end position="958"/>
    </location>
</feature>
<feature type="helix" evidence="67">
    <location>
        <begin position="959"/>
        <end position="963"/>
    </location>
</feature>
<feature type="turn" evidence="61">
    <location>
        <begin position="964"/>
        <end position="966"/>
    </location>
</feature>
<feature type="helix" evidence="67">
    <location>
        <begin position="967"/>
        <end position="980"/>
    </location>
</feature>
<feature type="helix" evidence="67">
    <location>
        <begin position="981"/>
        <end position="983"/>
    </location>
</feature>
<feature type="helix" evidence="67">
    <location>
        <begin position="987"/>
        <end position="1003"/>
    </location>
</feature>
<feature type="turn" evidence="67">
    <location>
        <begin position="1006"/>
        <end position="1008"/>
    </location>
</feature>
<feature type="strand" evidence="67">
    <location>
        <begin position="1009"/>
        <end position="1011"/>
    </location>
</feature>
<feature type="helix" evidence="67">
    <location>
        <begin position="1013"/>
        <end position="1025"/>
    </location>
</feature>
<feature type="helix" evidence="67">
    <location>
        <begin position="1029"/>
        <end position="1045"/>
    </location>
</feature>
<feature type="helix" evidence="67">
    <location>
        <begin position="1047"/>
        <end position="1049"/>
    </location>
</feature>
<feature type="helix" evidence="67">
    <location>
        <begin position="1052"/>
        <end position="1065"/>
    </location>
</feature>
<feature type="helix" evidence="67">
    <location>
        <begin position="1071"/>
        <end position="1088"/>
    </location>
</feature>
<feature type="helix" evidence="67">
    <location>
        <begin position="1090"/>
        <end position="1099"/>
    </location>
</feature>
<feature type="helix" evidence="67">
    <location>
        <begin position="1100"/>
        <end position="1102"/>
    </location>
</feature>
<feature type="helix" evidence="67">
    <location>
        <begin position="1106"/>
        <end position="1122"/>
    </location>
</feature>
<feature type="helix" evidence="67">
    <location>
        <begin position="1125"/>
        <end position="1137"/>
    </location>
</feature>
<feature type="strand" evidence="65">
    <location>
        <begin position="1138"/>
        <end position="1140"/>
    </location>
</feature>
<feature type="helix" evidence="67">
    <location>
        <begin position="1141"/>
        <end position="1158"/>
    </location>
</feature>
<feature type="helix" evidence="67">
    <location>
        <begin position="1159"/>
        <end position="1161"/>
    </location>
</feature>
<feature type="helix" evidence="67">
    <location>
        <begin position="1162"/>
        <end position="1177"/>
    </location>
</feature>
<feature type="strand" evidence="62">
    <location>
        <begin position="1178"/>
        <end position="1180"/>
    </location>
</feature>
<feature type="helix" evidence="67">
    <location>
        <begin position="1182"/>
        <end position="1198"/>
    </location>
</feature>
<feature type="strand" evidence="65">
    <location>
        <begin position="1199"/>
        <end position="1203"/>
    </location>
</feature>
<feature type="helix" evidence="67">
    <location>
        <begin position="1205"/>
        <end position="1215"/>
    </location>
</feature>
<feature type="helix" evidence="67">
    <location>
        <begin position="1216"/>
        <end position="1220"/>
    </location>
</feature>
<feature type="helix" evidence="67">
    <location>
        <begin position="1224"/>
        <end position="1241"/>
    </location>
</feature>
<feature type="helix" evidence="67">
    <location>
        <begin position="1243"/>
        <end position="1250"/>
    </location>
</feature>
<feature type="helix" evidence="67">
    <location>
        <begin position="1251"/>
        <end position="1253"/>
    </location>
</feature>
<feature type="helix" evidence="67">
    <location>
        <begin position="1259"/>
        <end position="1283"/>
    </location>
</feature>
<feature type="strand" evidence="68">
    <location>
        <begin position="1291"/>
        <end position="1293"/>
    </location>
</feature>
<feature type="helix" evidence="67">
    <location>
        <begin position="1299"/>
        <end position="1301"/>
    </location>
</feature>
<protein>
    <recommendedName>
        <fullName>Splicing factor 3B subunit 1</fullName>
    </recommendedName>
    <alternativeName>
        <fullName>Pre-mRNA-splicing factor SF3b 155 kDa subunit</fullName>
        <shortName evidence="33">SF3b155</shortName>
    </alternativeName>
    <alternativeName>
        <fullName evidence="31">Spliceosome-associated protein 155</fullName>
        <shortName evidence="31">SAP 155</shortName>
    </alternativeName>
</protein>
<keyword id="KW-0002">3D-structure</keyword>
<keyword id="KW-0007">Acetylation</keyword>
<keyword id="KW-0025">Alternative splicing</keyword>
<keyword id="KW-0164">Citrullination</keyword>
<keyword id="KW-1017">Isopeptide bond</keyword>
<keyword id="KW-0507">mRNA processing</keyword>
<keyword id="KW-0508">mRNA splicing</keyword>
<keyword id="KW-0539">Nucleus</keyword>
<keyword id="KW-0597">Phosphoprotein</keyword>
<keyword id="KW-1267">Proteomics identification</keyword>
<keyword id="KW-1185">Reference proteome</keyword>
<keyword id="KW-0677">Repeat</keyword>
<keyword id="KW-0694">RNA-binding</keyword>
<keyword id="KW-0747">Spliceosome</keyword>
<keyword id="KW-0832">Ubl conjugation</keyword>
<reference key="1">
    <citation type="journal article" date="1998" name="Genes Dev.">
        <title>Phosphorylation of spliceosomal protein SAP 155 coupled with splicing catalysis.</title>
        <authorList>
            <person name="Wang C."/>
            <person name="Chua K."/>
            <person name="Seghezzi W."/>
            <person name="Lees E."/>
            <person name="Gozani O."/>
            <person name="Reed R."/>
        </authorList>
    </citation>
    <scope>NUCLEOTIDE SEQUENCE [MRNA] (ISOFORM 1)</scope>
    <scope>PHOSPHORYLATION</scope>
</reference>
<reference key="2">
    <citation type="submission" date="1998-09" db="EMBL/GenBank/DDBJ databases">
        <title>Full clone sequencing of the longest available member from each UniGene cluster.</title>
        <authorList>
            <person name="Woessner J."/>
            <person name="Tan F."/>
            <person name="Marra M."/>
            <person name="Kucaba T."/>
            <person name="Yandell M."/>
            <person name="Martin J."/>
            <person name="Marth G."/>
            <person name="Bowles L."/>
            <person name="Wylie T."/>
            <person name="Bowers Y."/>
            <person name="Steptoe M."/>
            <person name="Theising B."/>
            <person name="Geisel S."/>
            <person name="Allen M."/>
            <person name="Underwood K."/>
            <person name="Chappell J."/>
            <person name="Person B."/>
            <person name="Gibbons M."/>
            <person name="Harvey N."/>
            <person name="Pape D."/>
            <person name="Chamberlain A."/>
            <person name="Morales R."/>
            <person name="Schurk R."/>
            <person name="Ritter E."/>
            <person name="Kohn S."/>
            <person name="Swaller T."/>
            <person name="Behymer K."/>
            <person name="Hillier L."/>
            <person name="Wilson R."/>
            <person name="Waterston R."/>
        </authorList>
    </citation>
    <scope>NUCLEOTIDE SEQUENCE [LARGE SCALE MRNA] (ISOFORM 2)</scope>
</reference>
<reference key="3">
    <citation type="journal article" date="2005" name="Nature">
        <title>Generation and annotation of the DNA sequences of human chromosomes 2 and 4.</title>
        <authorList>
            <person name="Hillier L.W."/>
            <person name="Graves T.A."/>
            <person name="Fulton R.S."/>
            <person name="Fulton L.A."/>
            <person name="Pepin K.H."/>
            <person name="Minx P."/>
            <person name="Wagner-McPherson C."/>
            <person name="Layman D."/>
            <person name="Wylie K."/>
            <person name="Sekhon M."/>
            <person name="Becker M.C."/>
            <person name="Fewell G.A."/>
            <person name="Delehaunty K.D."/>
            <person name="Miner T.L."/>
            <person name="Nash W.E."/>
            <person name="Kremitzki C."/>
            <person name="Oddy L."/>
            <person name="Du H."/>
            <person name="Sun H."/>
            <person name="Bradshaw-Cordum H."/>
            <person name="Ali J."/>
            <person name="Carter J."/>
            <person name="Cordes M."/>
            <person name="Harris A."/>
            <person name="Isak A."/>
            <person name="van Brunt A."/>
            <person name="Nguyen C."/>
            <person name="Du F."/>
            <person name="Courtney L."/>
            <person name="Kalicki J."/>
            <person name="Ozersky P."/>
            <person name="Abbott S."/>
            <person name="Armstrong J."/>
            <person name="Belter E.A."/>
            <person name="Caruso L."/>
            <person name="Cedroni M."/>
            <person name="Cotton M."/>
            <person name="Davidson T."/>
            <person name="Desai A."/>
            <person name="Elliott G."/>
            <person name="Erb T."/>
            <person name="Fronick C."/>
            <person name="Gaige T."/>
            <person name="Haakenson W."/>
            <person name="Haglund K."/>
            <person name="Holmes A."/>
            <person name="Harkins R."/>
            <person name="Kim K."/>
            <person name="Kruchowski S.S."/>
            <person name="Strong C.M."/>
            <person name="Grewal N."/>
            <person name="Goyea E."/>
            <person name="Hou S."/>
            <person name="Levy A."/>
            <person name="Martinka S."/>
            <person name="Mead K."/>
            <person name="McLellan M.D."/>
            <person name="Meyer R."/>
            <person name="Randall-Maher J."/>
            <person name="Tomlinson C."/>
            <person name="Dauphin-Kohlberg S."/>
            <person name="Kozlowicz-Reilly A."/>
            <person name="Shah N."/>
            <person name="Swearengen-Shahid S."/>
            <person name="Snider J."/>
            <person name="Strong J.T."/>
            <person name="Thompson J."/>
            <person name="Yoakum M."/>
            <person name="Leonard S."/>
            <person name="Pearman C."/>
            <person name="Trani L."/>
            <person name="Radionenko M."/>
            <person name="Waligorski J.E."/>
            <person name="Wang C."/>
            <person name="Rock S.M."/>
            <person name="Tin-Wollam A.-M."/>
            <person name="Maupin R."/>
            <person name="Latreille P."/>
            <person name="Wendl M.C."/>
            <person name="Yang S.-P."/>
            <person name="Pohl C."/>
            <person name="Wallis J.W."/>
            <person name="Spieth J."/>
            <person name="Bieri T.A."/>
            <person name="Berkowicz N."/>
            <person name="Nelson J.O."/>
            <person name="Osborne J."/>
            <person name="Ding L."/>
            <person name="Meyer R."/>
            <person name="Sabo A."/>
            <person name="Shotland Y."/>
            <person name="Sinha P."/>
            <person name="Wohldmann P.E."/>
            <person name="Cook L.L."/>
            <person name="Hickenbotham M.T."/>
            <person name="Eldred J."/>
            <person name="Williams D."/>
            <person name="Jones T.A."/>
            <person name="She X."/>
            <person name="Ciccarelli F.D."/>
            <person name="Izaurralde E."/>
            <person name="Taylor J."/>
            <person name="Schmutz J."/>
            <person name="Myers R.M."/>
            <person name="Cox D.R."/>
            <person name="Huang X."/>
            <person name="McPherson J.D."/>
            <person name="Mardis E.R."/>
            <person name="Clifton S.W."/>
            <person name="Warren W.C."/>
            <person name="Chinwalla A.T."/>
            <person name="Eddy S.R."/>
            <person name="Marra M.A."/>
            <person name="Ovcharenko I."/>
            <person name="Furey T.S."/>
            <person name="Miller W."/>
            <person name="Eichler E.E."/>
            <person name="Bork P."/>
            <person name="Suyama M."/>
            <person name="Torrents D."/>
            <person name="Waterston R.H."/>
            <person name="Wilson R.K."/>
        </authorList>
    </citation>
    <scope>NUCLEOTIDE SEQUENCE [LARGE SCALE GENOMIC DNA]</scope>
</reference>
<reference key="4">
    <citation type="submission" date="1998-06" db="EMBL/GenBank/DDBJ databases">
        <authorList>
            <person name="Yu W."/>
            <person name="Gibbs R.A."/>
        </authorList>
    </citation>
    <scope>NUCLEOTIDE SEQUENCE [LARGE SCALE MRNA] OF 1011-1304 (ISOFORM 1)</scope>
    <source>
        <tissue>Brain</tissue>
    </source>
</reference>
<reference key="5">
    <citation type="journal article" date="2000" name="Mol. Cell">
        <title>Functional association of U2 snRNP with the ATP-independent spliceosomal complex E.</title>
        <authorList>
            <person name="Das R."/>
            <person name="Zhou Z."/>
            <person name="Reed R."/>
        </authorList>
    </citation>
    <scope>CHARACTERIZATION OF THE SPLICEOSOME</scope>
</reference>
<reference key="6">
    <citation type="journal article" date="2002" name="EMBO J.">
        <title>Characterization of novel SF3b and 17S U2 snRNP proteins, including a human Prp5p homologue and an SF3b DEAD-box protein.</title>
        <authorList>
            <person name="Will C.L."/>
            <person name="Urlaub H."/>
            <person name="Achsel T."/>
            <person name="Gentzel M."/>
            <person name="Wilm M."/>
            <person name="Luehrmann R."/>
        </authorList>
    </citation>
    <scope>IDENTIFICATION IN THE SF3B COMPLEX</scope>
</reference>
<reference key="7">
    <citation type="journal article" date="2002" name="J. Biol. Chem.">
        <title>Phosphorylation-dependent interaction between the splicing factors SAP155 and NIPP1.</title>
        <authorList>
            <person name="Boudrez A."/>
            <person name="Beullens M."/>
            <person name="Waelkens E."/>
            <person name="Stalmans W."/>
            <person name="Bollen M."/>
        </authorList>
    </citation>
    <scope>SUBCELLULAR LOCATION</scope>
    <scope>INTERACTION WITH PPP1R8</scope>
    <scope>PHOSPHORYLATION AT THR-244; THR-248 AND THR-313</scope>
    <scope>MUTAGENESIS OF THR-223; THR-227; THR-235; THR-244; THR-248; THR-257; THR-261; THR-267; THR-273; THR-278; THR-296; THR-303 AND THR-313</scope>
</reference>
<reference key="8">
    <citation type="journal article" date="2002" name="RNA">
        <title>Purification and characterization of native spliceosomes suitable for three-dimensional structural analysis.</title>
        <authorList>
            <person name="Jurica M.S."/>
            <person name="Licklider L.J."/>
            <person name="Gygi S.P."/>
            <person name="Grigorieff N."/>
            <person name="Moore M.J."/>
        </authorList>
    </citation>
    <scope>IDENTIFICATION BY MASS SPECTROMETRY</scope>
    <scope>IDENTIFICATION IN THE SPLICEOSOMAL C COMPLEX</scope>
</reference>
<reference key="9">
    <citation type="journal article" date="2003" name="Science">
        <title>Molecular architecture of the multiprotein splicing factor SF3b.</title>
        <authorList>
            <person name="Golas M.M."/>
            <person name="Sander B."/>
            <person name="Will C.L."/>
            <person name="Luhrmann R."/>
            <person name="Stark H."/>
        </authorList>
    </citation>
    <scope>IDENTIFICATION IN THE SF3B COMPLEX</scope>
    <scope>ELECTRON MICROSCOPY OF THE SF3B COMPLEX</scope>
</reference>
<reference key="10">
    <citation type="journal article" date="2004" name="RNA">
        <title>The human 18S U11/U12 snRNP contains a set of novel proteins not found in the U2-dependent spliceosome.</title>
        <authorList>
            <person name="Will C.L."/>
            <person name="Schneider C."/>
            <person name="Hossbach M."/>
            <person name="Urlaub H."/>
            <person name="Rauhut R."/>
            <person name="Elbashir S."/>
            <person name="Tuschl T."/>
            <person name="Luehrmann R."/>
        </authorList>
    </citation>
    <scope>IDENTIFICATION IN A COMPLEX WITH THE MINOR SPLICEOSOME</scope>
    <scope>FUNCTION</scope>
    <scope>IDENTIFICATION BY MASS SPECTROMETRY</scope>
</reference>
<reference key="11">
    <citation type="journal article" date="2006" name="Cell">
        <title>Global, in vivo, and site-specific phosphorylation dynamics in signaling networks.</title>
        <authorList>
            <person name="Olsen J.V."/>
            <person name="Blagoev B."/>
            <person name="Gnad F."/>
            <person name="Macek B."/>
            <person name="Kumar C."/>
            <person name="Mortensen P."/>
            <person name="Mann M."/>
        </authorList>
    </citation>
    <scope>PHOSPHORYLATION [LARGE SCALE ANALYSIS] AT THR-211; THR-223; THR-296 AND THR-299</scope>
    <scope>IDENTIFICATION BY MASS SPECTROMETRY [LARGE SCALE ANALYSIS]</scope>
    <source>
        <tissue>Cervix carcinoma</tissue>
    </source>
</reference>
<reference key="12">
    <citation type="journal article" date="2006" name="J. Biol. Chem.">
        <title>The WSTF-SNF2h chromatin remodeling complex interacts with several nuclear proteins in transcription.</title>
        <authorList>
            <person name="Cavellan E."/>
            <person name="Asp P."/>
            <person name="Percipalle P."/>
            <person name="Oestlund Farrants A.-K."/>
        </authorList>
    </citation>
    <scope>IDENTIFICATION IN THE B-WICH COMPLEX</scope>
</reference>
<reference key="13">
    <citation type="journal article" date="2006" name="Nat. Biotechnol.">
        <title>A probability-based approach for high-throughput protein phosphorylation analysis and site localization.</title>
        <authorList>
            <person name="Beausoleil S.A."/>
            <person name="Villen J."/>
            <person name="Gerber S.A."/>
            <person name="Rush J."/>
            <person name="Gygi S.P."/>
        </authorList>
    </citation>
    <scope>PHOSPHORYLATION [LARGE SCALE ANALYSIS] AT THR-207; THR-211 AND THR-328</scope>
    <scope>IDENTIFICATION BY MASS SPECTROMETRY [LARGE SCALE ANALYSIS]</scope>
    <source>
        <tissue>Cervix carcinoma</tissue>
    </source>
</reference>
<reference key="14">
    <citation type="journal article" date="2007" name="J. Proteome Res.">
        <title>Improved titanium dioxide enrichment of phosphopeptides from HeLa cells and high confident phosphopeptide identification by cross-validation of MS/MS and MS/MS/MS spectra.</title>
        <authorList>
            <person name="Yu L.R."/>
            <person name="Zhu Z."/>
            <person name="Chan K.C."/>
            <person name="Issaq H.J."/>
            <person name="Dimitrov D.S."/>
            <person name="Veenstra T.D."/>
        </authorList>
    </citation>
    <scope>PHOSPHORYLATION [LARGE SCALE ANALYSIS] AT THR-142 AND THR-223</scope>
    <scope>IDENTIFICATION BY MASS SPECTROMETRY [LARGE SCALE ANALYSIS]</scope>
    <source>
        <tissue>Cervix carcinoma</tissue>
    </source>
</reference>
<reference key="15">
    <citation type="journal article" date="2008" name="J. Proteome Res.">
        <title>Combining protein-based IMAC, peptide-based IMAC, and MudPIT for efficient phosphoproteomic analysis.</title>
        <authorList>
            <person name="Cantin G.T."/>
            <person name="Yi W."/>
            <person name="Lu B."/>
            <person name="Park S.K."/>
            <person name="Xu T."/>
            <person name="Lee J.-D."/>
            <person name="Yates J.R. III"/>
        </authorList>
    </citation>
    <scope>PHOSPHORYLATION [LARGE SCALE ANALYSIS] AT THR-223 AND THR-267</scope>
    <scope>IDENTIFICATION BY MASS SPECTROMETRY [LARGE SCALE ANALYSIS]</scope>
    <source>
        <tissue>Cervix carcinoma</tissue>
    </source>
</reference>
<reference key="16">
    <citation type="journal article" date="2008" name="Mol. Cell">
        <title>Kinase-selective enrichment enables quantitative phosphoproteomics of the kinome across the cell cycle.</title>
        <authorList>
            <person name="Daub H."/>
            <person name="Olsen J.V."/>
            <person name="Bairlein M."/>
            <person name="Gnad F."/>
            <person name="Oppermann F.S."/>
            <person name="Korner R."/>
            <person name="Greff Z."/>
            <person name="Keri G."/>
            <person name="Stemmann O."/>
            <person name="Mann M."/>
        </authorList>
    </citation>
    <scope>PHOSPHORYLATION [LARGE SCALE ANALYSIS] AT THR-354</scope>
    <scope>IDENTIFICATION BY MASS SPECTROMETRY [LARGE SCALE ANALYSIS]</scope>
    <source>
        <tissue>Cervix carcinoma</tissue>
    </source>
</reference>
<reference key="17">
    <citation type="journal article" date="2008" name="Proc. Natl. Acad. Sci. U.S.A.">
        <title>A quantitative atlas of mitotic phosphorylation.</title>
        <authorList>
            <person name="Dephoure N."/>
            <person name="Zhou C."/>
            <person name="Villen J."/>
            <person name="Beausoleil S.A."/>
            <person name="Bakalarski C.E."/>
            <person name="Elledge S.J."/>
            <person name="Gygi S.P."/>
        </authorList>
    </citation>
    <scope>PHOSPHORYLATION [LARGE SCALE ANALYSIS] AT SER-129; THR-142; SER-194; THR-207; THR-211; THR-223; THR-227; THR-326; THR-328; SER-332 AND SER-488</scope>
    <scope>IDENTIFICATION BY MASS SPECTROMETRY [LARGE SCALE ANALYSIS]</scope>
    <source>
        <tissue>Cervix carcinoma</tissue>
    </source>
</reference>
<reference key="18">
    <citation type="journal article" date="2009" name="Anal. Chem.">
        <title>Lys-N and trypsin cover complementary parts of the phosphoproteome in a refined SCX-based approach.</title>
        <authorList>
            <person name="Gauci S."/>
            <person name="Helbig A.O."/>
            <person name="Slijper M."/>
            <person name="Krijgsveld J."/>
            <person name="Heck A.J."/>
            <person name="Mohammed S."/>
        </authorList>
    </citation>
    <scope>IDENTIFICATION BY MASS SPECTROMETRY [LARGE SCALE ANALYSIS]</scope>
</reference>
<reference key="19">
    <citation type="journal article" date="2009" name="Sci. Signal.">
        <title>Quantitative phosphoproteomic analysis of T cell receptor signaling reveals system-wide modulation of protein-protein interactions.</title>
        <authorList>
            <person name="Mayya V."/>
            <person name="Lundgren D.H."/>
            <person name="Hwang S.-I."/>
            <person name="Rezaul K."/>
            <person name="Wu L."/>
            <person name="Eng J.K."/>
            <person name="Rodionov V."/>
            <person name="Han D.K."/>
        </authorList>
    </citation>
    <scope>PHOSPHORYLATION [LARGE SCALE ANALYSIS] AT THR-207; THR-211; THR-223; THR-227; THR-326; THR-341; SER-349; THR-350; SER-400; THR-434 AND THR-436</scope>
    <scope>IDENTIFICATION BY MASS SPECTROMETRY [LARGE SCALE ANALYSIS]</scope>
    <source>
        <tissue>Leukemic T-cell</tissue>
    </source>
</reference>
<reference key="20">
    <citation type="journal article" date="2009" name="Science">
        <title>Lysine acetylation targets protein complexes and co-regulates major cellular functions.</title>
        <authorList>
            <person name="Choudhary C."/>
            <person name="Kumar C."/>
            <person name="Gnad F."/>
            <person name="Nielsen M.L."/>
            <person name="Rehman M."/>
            <person name="Walther T.C."/>
            <person name="Olsen J.V."/>
            <person name="Mann M."/>
        </authorList>
    </citation>
    <scope>ACETYLATION [LARGE SCALE ANALYSIS] AT LYS-141; LYS-554 AND LYS-562</scope>
    <scope>IDENTIFICATION BY MASS SPECTROMETRY [LARGE SCALE ANALYSIS]</scope>
</reference>
<reference key="21">
    <citation type="journal article" date="2010" name="Sci. Signal.">
        <title>Quantitative phosphoproteomics reveals widespread full phosphorylation site occupancy during mitosis.</title>
        <authorList>
            <person name="Olsen J.V."/>
            <person name="Vermeulen M."/>
            <person name="Santamaria A."/>
            <person name="Kumar C."/>
            <person name="Miller M.L."/>
            <person name="Jensen L.J."/>
            <person name="Gnad F."/>
            <person name="Cox J."/>
            <person name="Jensen T.S."/>
            <person name="Nigg E.A."/>
            <person name="Brunak S."/>
            <person name="Mann M."/>
        </authorList>
    </citation>
    <scope>PHOSPHORYLATION [LARGE SCALE ANALYSIS] AT SER-129; SER-194; THR-203; THR-207; THR-211; THR-223; THR-326; THR-328 AND SER-488</scope>
    <scope>IDENTIFICATION BY MASS SPECTROMETRY [LARGE SCALE ANALYSIS]</scope>
    <source>
        <tissue>Cervix carcinoma</tissue>
    </source>
</reference>
<reference key="22">
    <citation type="journal article" date="2011" name="BMC Syst. Biol.">
        <title>Initial characterization of the human central proteome.</title>
        <authorList>
            <person name="Burkard T.R."/>
            <person name="Planyavsky M."/>
            <person name="Kaupe I."/>
            <person name="Breitwieser F.P."/>
            <person name="Buerckstuemmer T."/>
            <person name="Bennett K.L."/>
            <person name="Superti-Furga G."/>
            <person name="Colinge J."/>
        </authorList>
    </citation>
    <scope>IDENTIFICATION BY MASS SPECTROMETRY [LARGE SCALE ANALYSIS]</scope>
</reference>
<reference key="23">
    <citation type="journal article" date="2011" name="Mol. Cell">
        <title>Human senataxin resolves RNA/DNA hybrids formed at transcriptional pause sites to promote Xrn2-dependent termination.</title>
        <authorList>
            <person name="Skourti-Stathaki K."/>
            <person name="Proudfoot N.J."/>
            <person name="Gromak N."/>
        </authorList>
    </citation>
    <scope>INTERACTION WITH SETX</scope>
</reference>
<reference key="24">
    <citation type="journal article" date="2011" name="Sci. Signal.">
        <title>System-wide temporal characterization of the proteome and phosphoproteome of human embryonic stem cell differentiation.</title>
        <authorList>
            <person name="Rigbolt K.T."/>
            <person name="Prokhorova T.A."/>
            <person name="Akimov V."/>
            <person name="Henningsen J."/>
            <person name="Johansen P.T."/>
            <person name="Kratchmarova I."/>
            <person name="Kassem M."/>
            <person name="Mann M."/>
            <person name="Olsen J.V."/>
            <person name="Blagoev B."/>
        </authorList>
    </citation>
    <scope>PHOSPHORYLATION [LARGE SCALE ANALYSIS] AT SER-129; THR-211; THR-341; SER-344; SER-349 AND THR-354</scope>
    <scope>IDENTIFICATION BY MASS SPECTROMETRY [LARGE SCALE ANALYSIS]</scope>
</reference>
<reference key="25">
    <citation type="journal article" date="2013" name="Genes Dev.">
        <title>PQBP1, a factor linked to intellectual disability, affects alternative splicing associated with neurite outgrowth.</title>
        <authorList>
            <person name="Wang Q."/>
            <person name="Moore M.J."/>
            <person name="Adelmant G."/>
            <person name="Marto J.A."/>
            <person name="Silver P.A."/>
        </authorList>
    </citation>
    <scope>INTERACTION WITH PQBP1</scope>
</reference>
<reference key="26">
    <citation type="journal article" date="2013" name="J. Proteome Res.">
        <title>Toward a comprehensive characterization of a human cancer cell phosphoproteome.</title>
        <authorList>
            <person name="Zhou H."/>
            <person name="Di Palma S."/>
            <person name="Preisinger C."/>
            <person name="Peng M."/>
            <person name="Polat A.N."/>
            <person name="Heck A.J."/>
            <person name="Mohammed S."/>
        </authorList>
    </citation>
    <scope>PHOSPHORYLATION [LARGE SCALE ANALYSIS] AT THR-125; SER-129; THR-142; SER-194; THR-207; THR-211; THR-223; THR-227; THR-235; THR-257; THR-261; THR-267; THR-278; THR-296; THR-303; THR-313; SER-322; THR-326; SER-332; THR-350; THR-354; SER-400; THR-426; THR-434; THR-436 AND SER-488</scope>
    <scope>IDENTIFICATION BY MASS SPECTROMETRY [LARGE SCALE ANALYSIS]</scope>
    <source>
        <tissue>Cervix carcinoma</tissue>
        <tissue>Erythroleukemia</tissue>
    </source>
</reference>
<reference key="27">
    <citation type="journal article" date="2014" name="J. Proteomics">
        <title>An enzyme assisted RP-RPLC approach for in-depth analysis of human liver phosphoproteome.</title>
        <authorList>
            <person name="Bian Y."/>
            <person name="Song C."/>
            <person name="Cheng K."/>
            <person name="Dong M."/>
            <person name="Wang F."/>
            <person name="Huang J."/>
            <person name="Sun D."/>
            <person name="Wang L."/>
            <person name="Ye M."/>
            <person name="Zou H."/>
        </authorList>
    </citation>
    <scope>PHOSPHORYLATION [LARGE SCALE ANALYSIS] AT SER-129; THR-211; THR-257; THR-261; THR-267; THR-273; THR-278; SER-287; THR-303; THR-313 AND SER-488</scope>
    <scope>IDENTIFICATION BY MASS SPECTROMETRY [LARGE SCALE ANALYSIS]</scope>
    <source>
        <tissue>Liver</tissue>
    </source>
</reference>
<reference key="28">
    <citation type="journal article" date="2014" name="Nat. Struct. Mol. Biol.">
        <title>Uncovering global SUMOylation signaling networks in a site-specific manner.</title>
        <authorList>
            <person name="Hendriks I.A."/>
            <person name="D'Souza R.C."/>
            <person name="Yang B."/>
            <person name="Verlaan-de Vries M."/>
            <person name="Mann M."/>
            <person name="Vertegaal A.C."/>
        </authorList>
    </citation>
    <scope>SUMOYLATION [LARGE SCALE ANALYSIS] AT LYS-413</scope>
    <scope>IDENTIFICATION BY MASS SPECTROMETRY [LARGE SCALE ANALYSIS]</scope>
</reference>
<reference key="29">
    <citation type="journal article" date="2014" name="Proc. Natl. Acad. Sci. U.S.A.">
        <title>Mapping of SUMO sites and analysis of SUMOylation changes induced by external stimuli.</title>
        <authorList>
            <person name="Impens F."/>
            <person name="Radoshevich L."/>
            <person name="Cossart P."/>
            <person name="Ribet D."/>
        </authorList>
    </citation>
    <scope>SUMOYLATION [LARGE SCALE ANALYSIS] AT LYS-413</scope>
    <scope>IDENTIFICATION BY MASS SPECTROMETRY [LARGE SCALE ANALYSIS]</scope>
</reference>
<reference key="30">
    <citation type="journal article" date="2015" name="Elife">
        <title>Cross-talk between PRMT1-mediated methylation and ubiquitylation on RBM15 controls RNA splicing.</title>
        <authorList>
            <person name="Zhang L."/>
            <person name="Tran N.T."/>
            <person name="Su H."/>
            <person name="Wang R."/>
            <person name="Lu Y."/>
            <person name="Tang H."/>
            <person name="Aoyagi S."/>
            <person name="Guo A."/>
            <person name="Khodadadi-Jamayran A."/>
            <person name="Zhou D."/>
            <person name="Qian K."/>
            <person name="Hricik T."/>
            <person name="Cote J."/>
            <person name="Han X."/>
            <person name="Zhou W."/>
            <person name="Laha S."/>
            <person name="Abdel-Wahab O."/>
            <person name="Levine R.L."/>
            <person name="Raffel G."/>
            <person name="Liu Y."/>
            <person name="Chen D."/>
            <person name="Li H."/>
            <person name="Townes T."/>
            <person name="Wang H."/>
            <person name="Deng H."/>
            <person name="Zheng Y.G."/>
            <person name="Leslie C."/>
            <person name="Luo M."/>
            <person name="Zhao X."/>
        </authorList>
    </citation>
    <scope>INTERACTION WITH RBM15</scope>
</reference>
<reference key="31">
    <citation type="journal article" date="2015" name="Mol. Cell. Proteomics">
        <title>System-wide analysis of SUMOylation dynamics in response to replication stress reveals novel small ubiquitin-like modified target proteins and acceptor lysines relevant for genome stability.</title>
        <authorList>
            <person name="Xiao Z."/>
            <person name="Chang J.G."/>
            <person name="Hendriks I.A."/>
            <person name="Sigurdsson J.O."/>
            <person name="Olsen J.V."/>
            <person name="Vertegaal A.C."/>
        </authorList>
    </citation>
    <scope>SUMOYLATION [LARGE SCALE ANALYSIS] AT LYS-413</scope>
    <scope>IDENTIFICATION BY MASS SPECTROMETRY [LARGE SCALE ANALYSIS]</scope>
</reference>
<reference key="32">
    <citation type="journal article" date="2017" name="Nat. Commun.">
        <title>Splicing modulators act at the branch point adenosine binding pocket defined by the PHF5A-SF3b complex.</title>
        <authorList>
            <person name="Teng T."/>
            <person name="Tsai J.H."/>
            <person name="Puyang X."/>
            <person name="Seiler M."/>
            <person name="Peng S."/>
            <person name="Prajapati S."/>
            <person name="Aird D."/>
            <person name="Buonamici S."/>
            <person name="Caleb B."/>
            <person name="Chan B."/>
            <person name="Corson L."/>
            <person name="Feala J."/>
            <person name="Fekkes P."/>
            <person name="Gerard B."/>
            <person name="Karr C."/>
            <person name="Korpal M."/>
            <person name="Liu X."/>
            <person name="Lowe J.T."/>
            <person name="Mizui Y."/>
            <person name="Palacino J."/>
            <person name="Park E."/>
            <person name="Smith P.G."/>
            <person name="Subramanian V."/>
            <person name="Wu Z.J."/>
            <person name="Zou J."/>
            <person name="Yu L."/>
            <person name="Chicas A."/>
            <person name="Warmuth M."/>
            <person name="Larsen N."/>
            <person name="Zhu P."/>
        </authorList>
    </citation>
    <scope>IDENTIFICATION BY MASS SPECTROMETRY</scope>
    <scope>IDENTIFICATION IN THE SF3B COMPLEX</scope>
    <scope>SUBCELLULAR LOCATION</scope>
</reference>
<reference key="33">
    <citation type="journal article" date="2017" name="Nat. Struct. Mol. Biol.">
        <title>Site-specific mapping of the human SUMO proteome reveals co-modification with phosphorylation.</title>
        <authorList>
            <person name="Hendriks I.A."/>
            <person name="Lyon D."/>
            <person name="Young C."/>
            <person name="Jensen L.J."/>
            <person name="Vertegaal A.C."/>
            <person name="Nielsen M.L."/>
        </authorList>
    </citation>
    <scope>SUMOYLATION [LARGE SCALE ANALYSIS] AT LYS-214; LYS-413 AND LYS-430</scope>
    <scope>IDENTIFICATION BY MASS SPECTROMETRY [LARGE SCALE ANALYSIS]</scope>
</reference>
<reference key="34">
    <citation type="journal article" date="2021" name="Nucleic Acids Res.">
        <title>SANS (USH1G) regulates pre-mRNA splicing by mediating the intra-nuclear transfer of tri-snRNP complexes.</title>
        <authorList>
            <person name="Yildirim A."/>
            <person name="Mozaffari-Jovin S."/>
            <person name="Wallisch A.K."/>
            <person name="Schaefer J."/>
            <person name="Ludwig S.E.J."/>
            <person name="Urlaub H."/>
            <person name="Luehrmann R."/>
            <person name="Wolfrum U."/>
        </authorList>
    </citation>
    <scope>INTERACTION WITH USH1G</scope>
    <scope>SUBCELLULAR LOCATION</scope>
</reference>
<reference key="35">
    <citation type="journal article" date="2021" name="Nucleic Acids Res.">
        <title>SDE2 is an essential gene required for ribosome biogenesis and the regulation of alternative splicing.</title>
        <authorList>
            <person name="Floro J."/>
            <person name="Dai A."/>
            <person name="Metzger A."/>
            <person name="Mora-Martin A."/>
            <person name="Ganem N.J."/>
            <person name="Cifuentes D."/>
            <person name="Wu C.S."/>
            <person name="Dalal J."/>
            <person name="Lyons S.M."/>
            <person name="Labadorf A."/>
            <person name="Flynn R.L."/>
        </authorList>
    </citation>
    <scope>INTERACTION WITH SDE2; CACTIN AND U2AF1</scope>
</reference>
<reference key="36">
    <citation type="journal article" date="2023" name="Biochemistry">
        <title>Biochemistry and Protein Interactions of the CYREN Microprotein.</title>
        <authorList>
            <person name="Xie L."/>
            <person name="Bowman M.E."/>
            <person name="Louie G.V."/>
            <person name="Zhang C."/>
            <person name="Ardejani M.S."/>
            <person name="Huang X."/>
            <person name="Chu Q."/>
            <person name="Donaldson C.J."/>
            <person name="Vaughan J.M."/>
            <person name="Shan H."/>
            <person name="Powers E.T."/>
            <person name="Kelly J.W."/>
            <person name="Lyumkis D."/>
            <person name="Noel J.P."/>
            <person name="Saghatelian A."/>
        </authorList>
    </citation>
    <scope>INTERACTION WITH CYREN</scope>
</reference>
<reference key="37">
    <citation type="journal article" date="2006" name="Proc. Natl. Acad. Sci. U.S.A.">
        <title>Crystal structure of a core spliceosomal protein interface.</title>
        <authorList>
            <person name="Schellenberg M.J."/>
            <person name="Edwards R.A."/>
            <person name="Ritchie D.B."/>
            <person name="Kent O.A."/>
            <person name="Golas M.M."/>
            <person name="Stark H."/>
            <person name="Luhrmann R."/>
            <person name="Glover J.N."/>
            <person name="MacMillan A.M."/>
        </authorList>
    </citation>
    <scope>X-RAY CRYSTALLOGRAPHY (2.50 ANGSTROMS) OF 373-415 IN COMPLEX WITH SF3B6</scope>
    <scope>INTERACTION WITH SF3B6</scope>
</reference>
<reference key="38">
    <citation type="journal article" date="2007" name="Nat. Struct. Mol. Biol.">
        <title>U2AF-homology motif interactions are required for alternative splicing regulation by SPF45.</title>
        <authorList>
            <person name="Corsini L."/>
            <person name="Bonnal S."/>
            <person name="Basquin J."/>
            <person name="Hothorn M."/>
            <person name="Scheffzek K."/>
            <person name="Valcarcel J."/>
            <person name="Sattler M."/>
        </authorList>
    </citation>
    <scope>X-RAY CRYSTALLOGRAPHY (2.11 ANGSTROMS) OF 333-342 IN COMPLEX WITH RBM17</scope>
    <scope>INTERACTION WITH RBM17</scope>
</reference>
<reference key="39">
    <citation type="submission" date="2007-01" db="PDB data bank">
        <title>NMR solution structure of the human spliceosomal protein complex p14-SF3B155.</title>
        <authorList>
            <consortium name="RIKEN structural genomics initiative (RSGI)"/>
        </authorList>
    </citation>
    <scope>STRUCTURE BY NMR OF 379-424 IN COMPLEX WITH SF3B6</scope>
</reference>
<reference key="40">
    <citation type="journal article" date="2011" name="RNA">
        <title>Structural model of the p14/SF3b155 - branch duplex complex.</title>
        <authorList>
            <person name="Schellenberg M.J."/>
            <person name="Dul E.L."/>
            <person name="MacMillan A.M."/>
        </authorList>
    </citation>
    <scope>X-RAY CRYSTALLOGRAPHY (2.38 ANGSTROMS) OF 377-415 IN COMPLEX WITH SF3B6</scope>
    <scope>INTERACTION WITH SF3B6</scope>
</reference>
<reference key="41">
    <citation type="journal article" date="2014" name="J. Biol. Chem.">
        <title>Cancer-relevant splicing factor CAPERalpha engages the essential splicing factor SF3b155 in a specific ternary complex.</title>
        <authorList>
            <person name="Loerch S."/>
            <person name="Maucuer A."/>
            <person name="Manceau V."/>
            <person name="Green M.R."/>
            <person name="Kielkopf C.L."/>
        </authorList>
    </citation>
    <scope>X-RAY CRYSTALLOGRAPHY (1.74 ANGSTROMS) OF 333-342 IN COMPLEX WITH RBM39</scope>
    <scope>INTERACTION WITH RBM39</scope>
    <scope>MUTAGENESIS OF TRP-200; TRP-218; TRP-232; TRP-254; TRP-293; TRP-310 AND TRP-338</scope>
</reference>
<reference key="42">
    <citation type="journal article" date="2016" name="Mol. Cell">
        <title>Molecular architecture of SF3b and structural consequences of its cancer-related mutations.</title>
        <authorList>
            <person name="Cretu C."/>
            <person name="Schmitzova J."/>
            <person name="Ponce-Salvatierra A."/>
            <person name="Dybkov O."/>
            <person name="De Laurentiis E.I."/>
            <person name="Sharma K."/>
            <person name="Will C.L."/>
            <person name="Urlaub H."/>
            <person name="Luehrmann R."/>
            <person name="Pena V."/>
        </authorList>
    </citation>
    <scope>X-RAY CRYSTALLOGRAPHY (3.10 ANGSTROMS) IN COMPLEX WITH SF3B3; SF3B5 AND PHF5A</scope>
    <scope>FUNCTION</scope>
    <scope>INTERACTION WITH SF3B3; SF3B5 AND PHF5A</scope>
    <scope>IDENTIFICATION IN THE SF3B COMPLEX</scope>
    <scope>SUBUNIT</scope>
    <scope>SUBCELLULAR LOCATION</scope>
    <scope>RNA-BINDING</scope>
    <scope>MUTAGENESIS OF LYS-700</scope>
</reference>
<reference evidence="37" key="43">
    <citation type="journal article" date="2019" name="J. Biol. Chem.">
        <title>The pre-mRNA splicing and transcription factor Tat-SF1 is a functional partner of the spliceosome SF3b1 subunit via a U2AF homology motif interface.</title>
        <authorList>
            <person name="Loerch S."/>
            <person name="Leach J.R."/>
            <person name="Horner S.W."/>
            <person name="Maji D."/>
            <person name="Jenkins J.L."/>
            <person name="Pulvino M.J."/>
            <person name="Kielkopf C.L."/>
        </authorList>
    </citation>
    <scope>X-RAY CRYSTALLOGRAPHY (1.13 ANGSTROMS) OF 291-297 IN COMPLEX WITH HTATSF1</scope>
</reference>
<reference evidence="38 39 40" key="44">
    <citation type="journal article" date="2020" name="Nature">
        <title>Molecular architecture of the human 17S U2 snRNP.</title>
        <authorList>
            <person name="Zhang Z."/>
            <person name="Will C.L."/>
            <person name="Bertram K."/>
            <person name="Dybkov O."/>
            <person name="Hartmuth K."/>
            <person name="Agafonov D.E."/>
            <person name="Hofele R."/>
            <person name="Urlaub H."/>
            <person name="Kastner B."/>
            <person name="Luehrmann R."/>
            <person name="Stark H."/>
        </authorList>
    </citation>
    <scope>STRUCTURE BY ELECTRON MICROSCOPY (4.10 ANGSTROMS) IN COMPLEX WITH THE 17S U2 SNRNP COMPLEX</scope>
    <scope>FUNCTION</scope>
    <scope>IDENTIFICATION IN THE 17S U2 SNRNP COMPLEX</scope>
</reference>
<reference evidence="41" key="45">
    <citation type="journal article" date="2021" name="Science">
        <title>Structure of the activated human minor spliceosome.</title>
        <authorList>
            <person name="Bai R."/>
            <person name="Wan R."/>
            <person name="Wang L."/>
            <person name="Xu K."/>
            <person name="Zhang Q."/>
            <person name="Lei J."/>
            <person name="Shi Y."/>
        </authorList>
    </citation>
    <scope>STRUCTURE BY ELECTRON MICROSCOPY (2.89 ANGSTROMS)</scope>
    <scope>FUNCTION</scope>
    <scope>SUBUNIT</scope>
</reference>
<reference evidence="42" key="46">
    <citation type="journal article" date="2022" name="Science">
        <title>Structural basis of branch site recognition by the human spliceosome.</title>
        <authorList>
            <person name="Tholen J."/>
            <person name="Razew M."/>
            <person name="Weis F."/>
            <person name="Galej W.P."/>
        </authorList>
    </citation>
    <scope>STRUCTURE BY ELECTRON MICROSCOPY (2.30 ANGSTROMS) IN COMPLEX WITH THE 17S U2 SNRNP COMPLEX</scope>
    <scope>FUNCTION</scope>
    <scope>IDENTIFICATION IN THE 17S U2 SNRNP COMPLEX</scope>
</reference>
<reference evidence="43" key="47">
    <citation type="journal article" date="2023" name="Nat. Commun.">
        <title>Mechanisms of the RNA helicases DDX42 and DDX46 in human U2 snRNP assembly.</title>
        <authorList>
            <person name="Yang F."/>
            <person name="Bian T."/>
            <person name="Zhan X."/>
            <person name="Chen Z."/>
            <person name="Xing Z."/>
            <person name="Larsen N.A."/>
            <person name="Zhang X."/>
            <person name="Shi Y."/>
        </authorList>
    </citation>
    <scope>STRUCTURE BY ELECTRON MICROSCOPY (2.70 ANGSTROMS) IN COMPLEX WITH THE 17S U2 SNRNP COMPLEX</scope>
    <scope>IDENTIFICATION IN THE 17S U2 SNRNP COMPLEX</scope>
</reference>
<name>SF3B1_HUMAN</name>